<keyword id="KW-0002">3D-structure</keyword>
<keyword id="KW-0025">Alternative splicing</keyword>
<keyword id="KW-0217">Developmental protein</keyword>
<keyword id="KW-0221">Differentiation</keyword>
<keyword id="KW-0225">Disease variant</keyword>
<keyword id="KW-0238">DNA-binding</keyword>
<keyword id="KW-0371">Homeobox</keyword>
<keyword id="KW-0539">Nucleus</keyword>
<keyword id="KW-0563">Paired box</keyword>
<keyword id="KW-1059">Peters anomaly</keyword>
<keyword id="KW-1267">Proteomics identification</keyword>
<keyword id="KW-1185">Reference proteome</keyword>
<keyword id="KW-0678">Repressor</keyword>
<keyword id="KW-0804">Transcription</keyword>
<keyword id="KW-0805">Transcription regulation</keyword>
<keyword id="KW-0832">Ubl conjugation</keyword>
<sequence length="422" mass="46683">MQNSHSGVNQLGGVFVNGRPLPDSTRQKIVELAHSGARPCDISRILQVSNGCVSKILGRYYETGSIRPRAIGGSKPRVATPEVVSKIAQYKRECPSIFAWEIRDRLLSEGVCTNDNIPSVSSINRVLRNLASEKQQMGADGMYDKLRMLNGQTGSWGTRPGWYPGTSVPGQPTQDGCQQQEGGGENTNSISSNGEDSDEAQMRLQLKRKLQRNRTSFTQEQIEALEKEFERTHYPDVFARERLAAKIDLPEARIQVWFSNRRAKWRREEKLRNQRRQASNTPSHIPISSSFSTSVYQPIPQPTTPVSSFTSGSMLGRTDTALTNTYSALPPMPSFTMANNLPMQPPVPSQTSSYSCMLPTSPSVNGRSYDTYTPPHMQTHMNSQPMGTSGTTSTGLISPGVSVPVQVPGSEPDMSQYWPRLQ</sequence>
<reference key="1">
    <citation type="journal article" date="1991" name="Cell">
        <title>Positional cloning and characterization of a paired box- and homeobox-containing gene from the aniridia region.</title>
        <authorList>
            <person name="Ton C.C.T."/>
            <person name="Hirvonen H."/>
            <person name="Miwa H."/>
            <person name="Weil M.M."/>
            <person name="Monaghan P."/>
            <person name="Jordan T."/>
            <person name="van Heyningen V."/>
            <person name="Hastie N.D."/>
            <person name="Meijers-Heijboer H."/>
            <person name="Drechsler M."/>
            <person name="Royer-Pokora B."/>
            <person name="Collins F.S."/>
            <person name="Swaroop A."/>
            <person name="Strong L.C."/>
            <person name="Saunders G.F."/>
        </authorList>
    </citation>
    <scope>NUCLEOTIDE SEQUENCE [MRNA] (ISOFORM 1)</scope>
    <source>
        <tissue>Fetal eye</tissue>
    </source>
</reference>
<reference key="2">
    <citation type="journal article" date="1992" name="Nat. Genet.">
        <title>Genomic structure, evolutionary conservation and aniridia mutations in the human PAX6 gene.</title>
        <authorList>
            <person name="Glaser T."/>
            <person name="Walton D.S."/>
            <person name="Maas R.L."/>
        </authorList>
    </citation>
    <scope>NUCLEOTIDE SEQUENCE [MRNA] (ISOFORM 1)</scope>
</reference>
<reference key="3">
    <citation type="submission" date="2001-07" db="EMBL/GenBank/DDBJ databases">
        <authorList>
            <person name="Liu J."/>
            <person name="Zhang B."/>
            <person name="Zhou Y."/>
            <person name="Peng X."/>
            <person name="Yuan J."/>
            <person name="Qiang B."/>
        </authorList>
    </citation>
    <scope>NUCLEOTIDE SEQUENCE [MRNA] (ISOFORM 1)</scope>
</reference>
<reference key="4">
    <citation type="journal article" date="2007" name="BMC Genomics">
        <title>The full-ORF clone resource of the German cDNA consortium.</title>
        <authorList>
            <person name="Bechtel S."/>
            <person name="Rosenfelder H."/>
            <person name="Duda A."/>
            <person name="Schmidt C.P."/>
            <person name="Ernst U."/>
            <person name="Wellenreuther R."/>
            <person name="Mehrle A."/>
            <person name="Schuster C."/>
            <person name="Bahr A."/>
            <person name="Bloecker H."/>
            <person name="Heubner D."/>
            <person name="Hoerlein A."/>
            <person name="Michel G."/>
            <person name="Wedler H."/>
            <person name="Koehrer K."/>
            <person name="Ottenwaelder B."/>
            <person name="Poustka A."/>
            <person name="Wiemann S."/>
            <person name="Schupp I."/>
        </authorList>
    </citation>
    <scope>NUCLEOTIDE SEQUENCE [LARGE SCALE MRNA] (ISOFORM 5A)</scope>
    <source>
        <tissue>Cerebellum</tissue>
    </source>
</reference>
<reference key="5">
    <citation type="journal article" date="2006" name="Nature">
        <title>Human chromosome 11 DNA sequence and analysis including novel gene identification.</title>
        <authorList>
            <person name="Taylor T.D."/>
            <person name="Noguchi H."/>
            <person name="Totoki Y."/>
            <person name="Toyoda A."/>
            <person name="Kuroki Y."/>
            <person name="Dewar K."/>
            <person name="Lloyd C."/>
            <person name="Itoh T."/>
            <person name="Takeda T."/>
            <person name="Kim D.-W."/>
            <person name="She X."/>
            <person name="Barlow K.F."/>
            <person name="Bloom T."/>
            <person name="Bruford E."/>
            <person name="Chang J.L."/>
            <person name="Cuomo C.A."/>
            <person name="Eichler E."/>
            <person name="FitzGerald M.G."/>
            <person name="Jaffe D.B."/>
            <person name="LaButti K."/>
            <person name="Nicol R."/>
            <person name="Park H.-S."/>
            <person name="Seaman C."/>
            <person name="Sougnez C."/>
            <person name="Yang X."/>
            <person name="Zimmer A.R."/>
            <person name="Zody M.C."/>
            <person name="Birren B.W."/>
            <person name="Nusbaum C."/>
            <person name="Fujiyama A."/>
            <person name="Hattori M."/>
            <person name="Rogers J."/>
            <person name="Lander E.S."/>
            <person name="Sakaki Y."/>
        </authorList>
    </citation>
    <scope>NUCLEOTIDE SEQUENCE [LARGE SCALE GENOMIC DNA]</scope>
</reference>
<reference key="6">
    <citation type="journal article" date="2004" name="Genome Res.">
        <title>The status, quality, and expansion of the NIH full-length cDNA project: the Mammalian Gene Collection (MGC).</title>
        <authorList>
            <consortium name="The MGC Project Team"/>
        </authorList>
    </citation>
    <scope>NUCLEOTIDE SEQUENCE [LARGE SCALE MRNA] (ISOFORM 1)</scope>
    <source>
        <tissue>Lung</tissue>
    </source>
</reference>
<reference key="7">
    <citation type="journal article" date="1994" name="Genes Dev.">
        <title>Two independent and interactive DNA-binding subdomains of the Pax6 paired domain are regulated by alternative splicing.</title>
        <authorList>
            <person name="Epstein J.A."/>
            <person name="Glaser T."/>
            <person name="Cai J."/>
            <person name="Jepeal L."/>
            <person name="Walton D.S."/>
            <person name="Maas R.L."/>
        </authorList>
    </citation>
    <scope>ALTERNATIVE SPLICING</scope>
    <scope>DNA-BINDING</scope>
    <scope>TISSUE SPECIFICITY</scope>
</reference>
<reference key="8">
    <citation type="journal article" date="1995" name="Am. J. Hum. Genet.">
        <title>Mutation of the PAX6 gene in patients with autosomal dominant keratitis.</title>
        <authorList>
            <person name="Mirzayans F."/>
            <person name="Pearce W.G."/>
            <person name="MacDonald I.M."/>
            <person name="Walter M.A."/>
        </authorList>
    </citation>
    <scope>INVOLVEMENT IN KERH</scope>
</reference>
<reference key="9">
    <citation type="journal article" date="2008" name="Proc. Natl. Acad. Sci. U.S.A.">
        <title>A quantitative atlas of mitotic phosphorylation.</title>
        <authorList>
            <person name="Dephoure N."/>
            <person name="Zhou C."/>
            <person name="Villen J."/>
            <person name="Beausoleil S.A."/>
            <person name="Bakalarski C.E."/>
            <person name="Elledge S.J."/>
            <person name="Gygi S.P."/>
        </authorList>
    </citation>
    <scope>IDENTIFICATION BY MASS SPECTROMETRY [LARGE SCALE ANALYSIS]</scope>
    <source>
        <tissue>Cervix carcinoma</tissue>
    </source>
</reference>
<reference key="10">
    <citation type="journal article" date="2009" name="Int. J. Dev. Neurosci.">
        <title>Expression of the homeobox genes PAX6, OTX2, and OTX1 in the early human fetal retina.</title>
        <authorList>
            <person name="Larsen K.B."/>
            <person name="Lutterodt M."/>
            <person name="Rath M.F."/>
            <person name="Moeller M."/>
        </authorList>
    </citation>
    <scope>DEVELOPMENTAL STAGE</scope>
</reference>
<reference key="11">
    <citation type="journal article" date="2010" name="Sci. Signal.">
        <title>Quantitative phosphoproteomics reveals widespread full phosphorylation site occupancy during mitosis.</title>
        <authorList>
            <person name="Olsen J.V."/>
            <person name="Vermeulen M."/>
            <person name="Santamaria A."/>
            <person name="Kumar C."/>
            <person name="Miller M.L."/>
            <person name="Jensen L.J."/>
            <person name="Gnad F."/>
            <person name="Cox J."/>
            <person name="Jensen T.S."/>
            <person name="Nigg E.A."/>
            <person name="Brunak S."/>
            <person name="Mann M."/>
        </authorList>
    </citation>
    <scope>IDENTIFICATION BY MASS SPECTROMETRY [LARGE SCALE ANALYSIS]</scope>
    <source>
        <tissue>Cervix carcinoma</tissue>
    </source>
</reference>
<reference key="12">
    <citation type="journal article" date="2013" name="Am. J. Hum. Genet.">
        <title>Disruption of autoregulatory feedback by a mutation in a remote, ultraconserved PAX6 enhancer causes aniridia.</title>
        <authorList>
            <person name="Bhatia S."/>
            <person name="Bengani H."/>
            <person name="Fish M."/>
            <person name="Brown A."/>
            <person name="Divizia M.T."/>
            <person name="de Marco R."/>
            <person name="Damante G."/>
            <person name="Grainger R."/>
            <person name="van Heyningen V."/>
            <person name="Kleinjan D.A."/>
        </authorList>
    </citation>
    <scope>INVOLVEMENT IN AN2</scope>
</reference>
<reference key="13">
    <citation type="journal article" date="1999" name="Genes Dev.">
        <title>Crystal structure of the human Pax-6 paired domain-DNA complex reveals specific roles for the linker region and carboxyl-terminal subdomain in DNA binding.</title>
        <authorList>
            <person name="Xu H.E."/>
            <person name="Rould M.A."/>
            <person name="Xu W."/>
            <person name="Epstein J.A."/>
            <person name="Maas R.L."/>
            <person name="Pabo C.O."/>
        </authorList>
    </citation>
    <scope>X-RAY CRYSTALLOGRAPHY (2.5 ANGSTROMS) OF 4-136</scope>
</reference>
<reference key="14">
    <citation type="journal article" date="1998" name="Hum. Mutat.">
        <title>PAX6 mutations reviewed.</title>
        <authorList>
            <person name="Prosser J."/>
            <person name="van Heyningen V."/>
        </authorList>
    </citation>
    <scope>REVIEW ON VARIANTS</scope>
</reference>
<reference key="15">
    <citation type="submission" date="2005-11" db="PDB data bank">
        <title>Solution structure of the homeobox domain of the human paired box protein PAX-6.</title>
        <authorList>
            <consortium name="RIKEN structural genomics initiative (RSGI)"/>
        </authorList>
    </citation>
    <scope>STRUCTURE BY NMR OF 211-277</scope>
</reference>
<reference key="16">
    <citation type="journal article" date="1993" name="Hum. Mol. Genet.">
        <title>PAX6 mutations in aniridia.</title>
        <authorList>
            <person name="Hanson I.M."/>
            <person name="Seawright A."/>
            <person name="Hardman K."/>
            <person name="Hodgson S."/>
            <person name="Zaletayev D."/>
            <person name="Fekete G."/>
            <person name="van Heyningen V."/>
        </authorList>
    </citation>
    <scope>VARIANT AN1 TRP-208</scope>
</reference>
<reference key="17">
    <citation type="journal article" date="1994" name="Nat. Genet.">
        <title>Mutations at the PAX6 locus are found in heterogeneous anterior segment malformations including Peters' anomaly.</title>
        <authorList>
            <person name="Hanson I.M."/>
            <person name="Fletcher J.M."/>
            <person name="Jordan T."/>
            <person name="Brown A."/>
            <person name="Taylor D."/>
            <person name="Adams R.J."/>
            <person name="Punnet H.H."/>
            <person name="van Heyningen V."/>
        </authorList>
    </citation>
    <scope>VARIANT ASGD5 GLY-26</scope>
</reference>
<reference key="18">
    <citation type="journal article" date="1996" name="Nat. Genet.">
        <title>PAX6 missense mutation in isolated foveal hypoplasia.</title>
        <authorList>
            <person name="Azuma N."/>
            <person name="Nishina S."/>
            <person name="Yanagisawa H."/>
            <person name="Okuyama T."/>
            <person name="Yamada M."/>
        </authorList>
    </citation>
    <scope>VARIANTS FVH1 CYS-125 AND CYS-128</scope>
</reference>
<reference key="19">
    <citation type="journal article" date="1997" name="Hum. Mol. Genet.">
        <title>Functional analysis of paired box missense mutations in the PAX6 gene.</title>
        <authorList>
            <person name="Tang H.K."/>
            <person name="Chao L.-Y."/>
            <person name="Saunders G.F."/>
        </authorList>
    </citation>
    <scope>VARIANT AN1 ARG-87</scope>
    <scope>VARIANT GLY-26</scope>
</reference>
<reference key="20">
    <citation type="journal article" date="1997" name="Mol. Cell. Probes">
        <title>Combined SSCP/heteroduplex analysis in the screening for PAX6 mutations.</title>
        <authorList>
            <person name="Axton R."/>
            <person name="Hanson I.M."/>
            <person name="Love J."/>
            <person name="Seawright A."/>
            <person name="Prosser J."/>
            <person name="van Heyningen V."/>
        </authorList>
    </citation>
    <scope>VARIANT AN1 22-PRO--ARG-26 DEL</scope>
</reference>
<reference key="21">
    <citation type="journal article" date="1998" name="Hum. Mutat.">
        <title>Ten novel mutations found in Aniridia.</title>
        <authorList>
            <person name="Wolf M.T.F."/>
            <person name="Lorenz B."/>
            <person name="Winterpacht A."/>
            <person name="Drechsler M."/>
            <person name="Schumacher V."/>
            <person name="Royer-Pokora B."/>
            <person name="Blankenagel A."/>
            <person name="Zabel B."/>
            <person name="Wildhardt G."/>
        </authorList>
    </citation>
    <scope>VARIANT AN1 TRP-18</scope>
</reference>
<reference key="22">
    <citation type="journal article" date="1998" name="Invest. Ophthalmol. Vis. Sci.">
        <title>Missense mutation at the C-terminus of the PAX6 gene in ocular anterior segment anomalies.</title>
        <authorList>
            <person name="Azuma N."/>
            <person name="Yamada M."/>
        </authorList>
    </citation>
    <scope>VARIANT EYE MALFORMATIONS ARG-422</scope>
</reference>
<reference key="23">
    <citation type="journal article" date="1998" name="Invest. Ophthalmol. Vis. Sci.">
        <title>Missense mutations in the PAX6 gene in aniridia.</title>
        <authorList>
            <person name="Azuma N."/>
            <person name="Hotta Y."/>
            <person name="Tanaka H."/>
            <person name="Yamada M."/>
        </authorList>
    </citation>
    <scope>VARIANTS AN1 SER-17; VAL-29; GLN-44 AND HIS-178</scope>
</reference>
<reference key="24">
    <citation type="journal article" date="1999" name="Am. J. Hum. Genet.">
        <title>Missense mutation in the alternative splice region of the PAX6 gene in eye anomalies.</title>
        <authorList>
            <person name="Azuma N."/>
            <person name="Yamaguchi Y."/>
            <person name="Handa H."/>
            <person name="Hayakawa M."/>
            <person name="Kanai A."/>
            <person name="Yamada M."/>
        </authorList>
    </citation>
    <scope>VARIANT ASGD5 ASP-53</scope>
</reference>
<reference key="25">
    <citation type="journal article" date="1999" name="Eur. J. Hum. Genet.">
        <title>Mutational analysis of PAX6: 16 novel mutations including 5 missense mutations with a mild aniridia phenotype.</title>
        <authorList>
            <person name="Groenskov K."/>
            <person name="Rosenberg T."/>
            <person name="Sand A."/>
            <person name="Broendum-Nielsen K."/>
        </authorList>
    </citation>
    <scope>ALTERNATIVE SPLICING</scope>
    <scope>VARIANTS AN1 SER-42; LEU-53; PRO-63; GLU-79 AND GLN-208</scope>
</reference>
<reference key="26">
    <citation type="journal article" date="1999" name="Hum. Mol. Genet.">
        <title>Missense mutations in the most ancient residues of the PAX6 paired domain underlie a spectrum of human congenital eye malformations.</title>
        <authorList>
            <person name="Hanson I.M."/>
            <person name="Churchill A."/>
            <person name="Love J."/>
            <person name="Axton R."/>
            <person name="Moore T."/>
            <person name="Clarke M."/>
            <person name="Meire F."/>
            <person name="van Heyningen V."/>
        </authorList>
    </citation>
    <scope>VARIANTS AN1 PRO-33; PRO-43 AND ASP-126</scope>
    <scope>VARIANT FVH1 VAL-64</scope>
</reference>
<reference key="27">
    <citation type="unpublished observations" date="1999-04">
        <authorList>
            <person name="Wildhardt G."/>
        </authorList>
    </citation>
    <scope>VARIANTS AN1 SER-29; ARG-119 AND ALA-353</scope>
</reference>
<reference key="28">
    <citation type="unpublished observations" date="1999-08">
        <authorList>
            <person name="Saunders G.F."/>
        </authorList>
    </citation>
    <scope>VARIANT AN1 37-ALA--PRO-39 DEL</scope>
</reference>
<reference key="29">
    <citation type="journal article" date="2000" name="Graefes Arch. Clin. Exp. Ophthalmol.">
        <title>A novel PAX6 gene mutation (P118R) in a family with congenital nystagmus associated with a variant form of aniridia.</title>
        <authorList>
            <person name="Sonoda S."/>
            <person name="Isashiki Y."/>
            <person name="Tabata Y."/>
            <person name="Kimura K."/>
            <person name="Kakiuchi T."/>
            <person name="Ohba N."/>
        </authorList>
    </citation>
    <scope>VARIANT NYSTAGMUS ARG-118</scope>
</reference>
<reference key="30">
    <citation type="journal article" date="2000" name="Hum. Mutat.">
        <title>Mutation in the PAX6 gene in twenty patients with aniridia.</title>
        <authorList>
            <person name="Chao L.-Y."/>
            <person name="Huff V."/>
            <person name="Strong L.C."/>
            <person name="Saunders G.F."/>
        </authorList>
    </citation>
    <scope>VARIANT AN1 37-ARG--PRO-39 DEL</scope>
    <scope>VARIANT ASP-387</scope>
</reference>
<reference key="31">
    <citation type="journal article" date="2001" name="Clin. Genet.">
        <title>PAX6 mutation in a family with aniridia, congenital ptosis, and mental retardation.</title>
        <authorList>
            <person name="Malandrini A."/>
            <person name="Mari F."/>
            <person name="Palmeri S."/>
            <person name="Gambelli S."/>
            <person name="Berti G."/>
            <person name="Bruttini M."/>
            <person name="Bardelli A.M."/>
            <person name="Williamson K."/>
            <person name="van Heyningen V."/>
            <person name="Renieri A."/>
        </authorList>
    </citation>
    <scope>VARIANT AN1 ARG-119</scope>
</reference>
<reference key="32">
    <citation type="journal article" date="2001" name="Hum. Mol. Genet.">
        <title>Missense mutation at the C-terminus of PAX6 negatively modulates homeodomain function.</title>
        <authorList>
            <person name="Singh S."/>
            <person name="Chao L.-Y."/>
            <person name="Mishra R."/>
            <person name="Davies J."/>
            <person name="Saunders G.F."/>
        </authorList>
    </citation>
    <scope>VARIANTS AN1 GLN-375 AND ARG-422</scope>
</reference>
<reference key="33">
    <citation type="journal article" date="2002" name="J. Med. Genet.">
        <title>National study of microphthalmia, anophthalmia, and coloboma (MAC) in Scotland: investigation of genetic aetiology.</title>
        <authorList>
            <person name="Morrison D."/>
            <person name="FitzPatrick D."/>
            <person name="Hanson I."/>
            <person name="Williamson K."/>
            <person name="van Heyningen V."/>
            <person name="Fleck B."/>
            <person name="Jones I."/>
            <person name="Chalmers J."/>
            <person name="Campbell H."/>
        </authorList>
    </citation>
    <scope>VARIANT AN1 THR-242</scope>
</reference>
<reference key="34">
    <citation type="journal article" date="2003" name="Am. J. Hum. Genet.">
        <title>Mutations of the PAX6 gene detected in patients with a variety of optic-nerve malformations.</title>
        <authorList>
            <person name="Azuma N."/>
            <person name="Yamaguchi Y."/>
            <person name="Handa H."/>
            <person name="Tadokoro K."/>
            <person name="Asaka A."/>
            <person name="Kawase E."/>
            <person name="Yamada M."/>
        </authorList>
    </citation>
    <scope>INVOLVEMENT IN OPTIC-NERVE MALFORMATIONS</scope>
    <scope>VARIANT MORNING GLORY DISK ANOMALY SER-68</scope>
    <scope>VARIANT COLON SER-258</scope>
    <scope>VARIANT MCOPCB12 SER-258</scope>
    <scope>VARIANT ASGD5 PRO-363</scope>
    <scope>VARIANTS BONH ILE-292; ARG-378; VAL-381 AND ALA-391</scope>
</reference>
<reference key="35">
    <citation type="journal article" date="2003" name="Eur. J. Hum. Genet.">
        <title>Screening for PAX6 gene mutations is consistent with haploinsufficiency as the main mechanism leading to various ocular defects.</title>
        <authorList>
            <person name="Vincent M.-C."/>
            <person name="Pujo A.-L."/>
            <person name="Olivier D."/>
            <person name="Calvas P."/>
        </authorList>
    </citation>
    <scope>VARIANTS AN1 PRO-19 AND 22-PRO--ARG-26 DEL</scope>
</reference>
<reference key="36">
    <citation type="journal article" date="2003" name="Hum. Mutat.">
        <title>Missense mutations in the DNA-binding region and termination codon in PAX6.</title>
        <authorList>
            <person name="Chao L.-Y."/>
            <person name="Mishra R."/>
            <person name="Strong L.C."/>
            <person name="Saunders G.F."/>
        </authorList>
    </citation>
    <scope>VARIANTS AN1 ARG-46; ARG-52; THR-56; ASP-73 AND LYS-87</scope>
    <scope>VARIANT THR-321</scope>
    <scope>CHARACTERIZATION OF VARIANTS AN1 ARG-46; ARG-52; LEU-53; THR-56 AND ASP-73</scope>
    <scope>CHARACTERIZATION OF VARIANT THR-321</scope>
</reference>
<reference key="37">
    <citation type="journal article" date="2006" name="Eur. J. Hum. Genet.">
        <title>Molecular analysis of a human PAX6 homeobox mutant.</title>
        <authorList>
            <person name="D'Elia A.V."/>
            <person name="Puppin C."/>
            <person name="Pellizzari L."/>
            <person name="Pianta A."/>
            <person name="Bregant E."/>
            <person name="Lonigro R."/>
            <person name="Tell G."/>
            <person name="Fogolari F."/>
            <person name="van Heyningen V."/>
            <person name="Damante G."/>
        </authorList>
    </citation>
    <scope>CHARACTERIZATION OF VARIANT AN1 THR-242</scope>
</reference>
<reference key="38">
    <citation type="journal article" date="2007" name="Am. J. Med. Genet. A">
        <title>A de novo nonsense mutation of PAX6 gene in a patient with aniridia, ataxia, and mental retardation.</title>
        <authorList>
            <person name="Graziano C."/>
            <person name="D'Elia A.V."/>
            <person name="Mazzanti L."/>
            <person name="Moscano F."/>
            <person name="Guidelli Guidi S."/>
            <person name="Scarano E."/>
            <person name="Turchetti D."/>
            <person name="Franzoni E."/>
            <person name="Romeo G."/>
            <person name="Damante G."/>
            <person name="Seri M."/>
        </authorList>
    </citation>
    <scope>INVOLVEMENT IN AN1</scope>
</reference>
<reference key="39">
    <citation type="journal article" date="2011" name="Mol. Vis.">
        <title>Mutation spectrum of PAX6 in Chinese patients with aniridia.</title>
        <authorList>
            <person name="Zhang X."/>
            <person name="Wang P."/>
            <person name="Li S."/>
            <person name="Xiao X."/>
            <person name="Guo X."/>
            <person name="Zhang Q."/>
        </authorList>
    </citation>
    <scope>VARIANT AN1 ARG-395</scope>
</reference>
<reference key="40">
    <citation type="journal article" date="2014" name="Clin. Genet.">
        <title>Molecular findings and clinical data in a cohort of 150 patients with anophthalmia/microphthalmia.</title>
        <authorList>
            <person name="Chassaing N."/>
            <person name="Causse A."/>
            <person name="Vigouroux A."/>
            <person name="Delahaye A."/>
            <person name="Alessandri J.L."/>
            <person name="Boespflug-Tanguy O."/>
            <person name="Boute-Benejean O."/>
            <person name="Dollfus H."/>
            <person name="Duban-Bedu B."/>
            <person name="Gilbert-Dussardier B."/>
            <person name="Giuliano F."/>
            <person name="Gonzales M."/>
            <person name="Holder-Espinasse M."/>
            <person name="Isidor B."/>
            <person name="Jacquemont M.L."/>
            <person name="Lacombe D."/>
            <person name="Martin-Coignard D."/>
            <person name="Mathieu-Dramard M."/>
            <person name="Odent S."/>
            <person name="Picone O."/>
            <person name="Pinson L."/>
            <person name="Quelin C."/>
            <person name="Sigaudy S."/>
            <person name="Toutain A."/>
            <person name="Thauvin-Robinet C."/>
            <person name="Kaplan J."/>
            <person name="Calvas P."/>
        </authorList>
    </citation>
    <scope>VARIANT AN1 PRO-19</scope>
</reference>
<reference key="41">
    <citation type="journal article" date="2018" name="Orphanet J. Rare Dis.">
        <title>Clinical and genetic characteristics of Chinese patients with familial or sporadic pediatric cataract.</title>
        <authorList>
            <person name="Li J."/>
            <person name="Leng Y."/>
            <person name="Han S."/>
            <person name="Yan L."/>
            <person name="Lu C."/>
            <person name="Luo Y."/>
            <person name="Zhang X."/>
            <person name="Cao L."/>
        </authorList>
    </citation>
    <scope>VARIANT FVH1 GLN-38</scope>
</reference>
<organism>
    <name type="scientific">Homo sapiens</name>
    <name type="common">Human</name>
    <dbReference type="NCBI Taxonomy" id="9606"/>
    <lineage>
        <taxon>Eukaryota</taxon>
        <taxon>Metazoa</taxon>
        <taxon>Chordata</taxon>
        <taxon>Craniata</taxon>
        <taxon>Vertebrata</taxon>
        <taxon>Euteleostomi</taxon>
        <taxon>Mammalia</taxon>
        <taxon>Eutheria</taxon>
        <taxon>Euarchontoglires</taxon>
        <taxon>Primates</taxon>
        <taxon>Haplorrhini</taxon>
        <taxon>Catarrhini</taxon>
        <taxon>Hominidae</taxon>
        <taxon>Homo</taxon>
    </lineage>
</organism>
<dbReference type="EMBL" id="M77844">
    <property type="protein sequence ID" value="AAA59962.1"/>
    <property type="molecule type" value="mRNA"/>
</dbReference>
<dbReference type="EMBL" id="M93650">
    <property type="protein sequence ID" value="AAA36416.1"/>
    <property type="molecule type" value="mRNA"/>
</dbReference>
<dbReference type="EMBL" id="AY047583">
    <property type="protein sequence ID" value="AAK95849.1"/>
    <property type="molecule type" value="mRNA"/>
</dbReference>
<dbReference type="EMBL" id="BX640762">
    <property type="protein sequence ID" value="CAE45868.1"/>
    <property type="molecule type" value="mRNA"/>
</dbReference>
<dbReference type="EMBL" id="Z83307">
    <property type="status" value="NOT_ANNOTATED_CDS"/>
    <property type="molecule type" value="Genomic_DNA"/>
</dbReference>
<dbReference type="EMBL" id="Z95332">
    <property type="status" value="NOT_ANNOTATED_CDS"/>
    <property type="molecule type" value="Genomic_DNA"/>
</dbReference>
<dbReference type="EMBL" id="BC011953">
    <property type="protein sequence ID" value="AAH11953.1"/>
    <property type="molecule type" value="mRNA"/>
</dbReference>
<dbReference type="CCDS" id="CCDS31451.1">
    <molecule id="P26367-1"/>
</dbReference>
<dbReference type="CCDS" id="CCDS31452.1">
    <molecule id="P26367-2"/>
</dbReference>
<dbReference type="PIR" id="A56674">
    <property type="entry name" value="A56674"/>
</dbReference>
<dbReference type="RefSeq" id="NP_000271.1">
    <molecule id="P26367-1"/>
    <property type="nucleotide sequence ID" value="NM_000280.6"/>
</dbReference>
<dbReference type="RefSeq" id="NP_001121084.1">
    <molecule id="P26367-1"/>
    <property type="nucleotide sequence ID" value="NM_001127612.3"/>
</dbReference>
<dbReference type="RefSeq" id="NP_001245391.1">
    <molecule id="P26367-2"/>
    <property type="nucleotide sequence ID" value="NM_001258462.3"/>
</dbReference>
<dbReference type="RefSeq" id="NP_001245392.1">
    <molecule id="P26367-2"/>
    <property type="nucleotide sequence ID" value="NM_001258463.2"/>
</dbReference>
<dbReference type="RefSeq" id="NP_001245393.1">
    <molecule id="P26367-1"/>
    <property type="nucleotide sequence ID" value="NM_001258464.2"/>
</dbReference>
<dbReference type="RefSeq" id="NP_001245394.1">
    <molecule id="P26367-1"/>
    <property type="nucleotide sequence ID" value="NM_001258465.3"/>
</dbReference>
<dbReference type="RefSeq" id="NP_001297087.1">
    <molecule id="P26367-2"/>
    <property type="nucleotide sequence ID" value="NM_001310158.2"/>
</dbReference>
<dbReference type="RefSeq" id="NP_001297088.1">
    <property type="nucleotide sequence ID" value="NM_001310159.1"/>
</dbReference>
<dbReference type="RefSeq" id="NP_001297090.1">
    <property type="nucleotide sequence ID" value="NM_001310161.1"/>
</dbReference>
<dbReference type="RefSeq" id="NP_001355816.1">
    <molecule id="P26367-1"/>
    <property type="nucleotide sequence ID" value="NM_001368887.2"/>
</dbReference>
<dbReference type="RefSeq" id="NP_001355817.1">
    <molecule id="P26367-1"/>
    <property type="nucleotide sequence ID" value="NM_001368888.2"/>
</dbReference>
<dbReference type="RefSeq" id="NP_001355818.1">
    <molecule id="P26367-1"/>
    <property type="nucleotide sequence ID" value="NM_001368889.2"/>
</dbReference>
<dbReference type="RefSeq" id="NP_001355819.1">
    <molecule id="P26367-1"/>
    <property type="nucleotide sequence ID" value="NM_001368890.2"/>
</dbReference>
<dbReference type="RefSeq" id="NP_001355820.1">
    <molecule id="P26367-1"/>
    <property type="nucleotide sequence ID" value="NM_001368891.2"/>
</dbReference>
<dbReference type="RefSeq" id="NP_001355821.1">
    <molecule id="P26367-2"/>
    <property type="nucleotide sequence ID" value="NM_001368892.2"/>
</dbReference>
<dbReference type="RefSeq" id="NP_001355822.1">
    <molecule id="P26367-2"/>
    <property type="nucleotide sequence ID" value="NM_001368893.2"/>
</dbReference>
<dbReference type="RefSeq" id="NP_001355823.1">
    <molecule id="P26367-2"/>
    <property type="nucleotide sequence ID" value="NM_001368894.2"/>
</dbReference>
<dbReference type="RefSeq" id="NP_001595.2">
    <molecule id="P26367-2"/>
    <property type="nucleotide sequence ID" value="NM_001604.5"/>
</dbReference>
<dbReference type="PDB" id="2CUE">
    <property type="method" value="NMR"/>
    <property type="chains" value="A=211-277"/>
</dbReference>
<dbReference type="PDB" id="6PAX">
    <property type="method" value="X-ray"/>
    <property type="resolution" value="2.50 A"/>
    <property type="chains" value="A=4-136"/>
</dbReference>
<dbReference type="PDBsum" id="2CUE"/>
<dbReference type="PDBsum" id="6PAX"/>
<dbReference type="BMRB" id="P26367"/>
<dbReference type="SMR" id="P26367"/>
<dbReference type="BioGRID" id="111114">
    <property type="interactions" value="349"/>
</dbReference>
<dbReference type="CORUM" id="P26367"/>
<dbReference type="DIP" id="DIP-37436N"/>
<dbReference type="FunCoup" id="P26367">
    <property type="interactions" value="3249"/>
</dbReference>
<dbReference type="IntAct" id="P26367">
    <property type="interactions" value="328"/>
</dbReference>
<dbReference type="MINT" id="P26367"/>
<dbReference type="STRING" id="9606.ENSP00000492024"/>
<dbReference type="GlyGen" id="P26367">
    <property type="glycosylation" value="1 site, 1 O-linked glycan (1 site)"/>
</dbReference>
<dbReference type="iPTMnet" id="P26367"/>
<dbReference type="PhosphoSitePlus" id="P26367"/>
<dbReference type="BioMuta" id="PAX6"/>
<dbReference type="DMDM" id="6174889"/>
<dbReference type="jPOST" id="P26367"/>
<dbReference type="MassIVE" id="P26367"/>
<dbReference type="PaxDb" id="9606-ENSP00000404100"/>
<dbReference type="PeptideAtlas" id="P26367"/>
<dbReference type="ProteomicsDB" id="54323">
    <molecule id="P26367-1"/>
</dbReference>
<dbReference type="ProteomicsDB" id="54324">
    <molecule id="P26367-2"/>
</dbReference>
<dbReference type="Pumba" id="P26367"/>
<dbReference type="Antibodypedia" id="12821">
    <property type="antibodies" value="996 antibodies from 48 providers"/>
</dbReference>
<dbReference type="DNASU" id="5080"/>
<dbReference type="Ensembl" id="ENST00000241001.13">
    <molecule id="P26367-1"/>
    <property type="protein sequence ID" value="ENSP00000241001.8"/>
    <property type="gene ID" value="ENSG00000007372.25"/>
</dbReference>
<dbReference type="Ensembl" id="ENST00000379107.7">
    <molecule id="P26367-2"/>
    <property type="protein sequence ID" value="ENSP00000368401.2"/>
    <property type="gene ID" value="ENSG00000007372.25"/>
</dbReference>
<dbReference type="Ensembl" id="ENST00000379109.7">
    <molecule id="P26367-1"/>
    <property type="protein sequence ID" value="ENSP00000368403.2"/>
    <property type="gene ID" value="ENSG00000007372.25"/>
</dbReference>
<dbReference type="Ensembl" id="ENST00000379129.7">
    <molecule id="P26367-2"/>
    <property type="protein sequence ID" value="ENSP00000368424.2"/>
    <property type="gene ID" value="ENSG00000007372.25"/>
</dbReference>
<dbReference type="Ensembl" id="ENST00000379132.8">
    <molecule id="P26367-1"/>
    <property type="protein sequence ID" value="ENSP00000368427.2"/>
    <property type="gene ID" value="ENSG00000007372.25"/>
</dbReference>
<dbReference type="Ensembl" id="ENST00000419022.6">
    <molecule id="P26367-2"/>
    <property type="protein sequence ID" value="ENSP00000404100.1"/>
    <property type="gene ID" value="ENSG00000007372.25"/>
</dbReference>
<dbReference type="Ensembl" id="ENST00000606377.7">
    <molecule id="P26367-2"/>
    <property type="protein sequence ID" value="ENSP00000480026.1"/>
    <property type="gene ID" value="ENSG00000007372.25"/>
</dbReference>
<dbReference type="Ensembl" id="ENST00000638914.3">
    <molecule id="P26367-2"/>
    <property type="protein sequence ID" value="ENSP00000492315.2"/>
    <property type="gene ID" value="ENSG00000007372.25"/>
</dbReference>
<dbReference type="Ensembl" id="ENST00000639409.1">
    <molecule id="P26367-2"/>
    <property type="protein sequence ID" value="ENSP00000492476.1"/>
    <property type="gene ID" value="ENSG00000007372.25"/>
</dbReference>
<dbReference type="Ensembl" id="ENST00000639916.1">
    <molecule id="P26367-1"/>
    <property type="protein sequence ID" value="ENSP00000490963.1"/>
    <property type="gene ID" value="ENSG00000007372.25"/>
</dbReference>
<dbReference type="Ensembl" id="ENST00000640287.1">
    <molecule id="P26367-1"/>
    <property type="protein sequence ID" value="ENSP00000492822.1"/>
    <property type="gene ID" value="ENSG00000007372.25"/>
</dbReference>
<dbReference type="Ensembl" id="ENST00000640368.2">
    <molecule id="P26367-2"/>
    <property type="protein sequence ID" value="ENSP00000492024.1"/>
    <property type="gene ID" value="ENSG00000007372.25"/>
</dbReference>
<dbReference type="Ensembl" id="ENST00000640610.1">
    <molecule id="P26367-1"/>
    <property type="protein sequence ID" value="ENSP00000491295.1"/>
    <property type="gene ID" value="ENSG00000007372.25"/>
</dbReference>
<dbReference type="Ensembl" id="ENST00000640975.1">
    <molecule id="P26367-2"/>
    <property type="protein sequence ID" value="ENSP00000491872.1"/>
    <property type="gene ID" value="ENSG00000007372.25"/>
</dbReference>
<dbReference type="Ensembl" id="ENST00000643871.1">
    <molecule id="P26367-1"/>
    <property type="protein sequence ID" value="ENSP00000495109.1"/>
    <property type="gene ID" value="ENSG00000007372.25"/>
</dbReference>
<dbReference type="GeneID" id="5080"/>
<dbReference type="KEGG" id="hsa:5080"/>
<dbReference type="MANE-Select" id="ENST00000640368.2">
    <molecule id="P26367-2"/>
    <property type="protein sequence ID" value="ENSP00000492024.1"/>
    <property type="RefSeq nucleotide sequence ID" value="NM_001368894.2"/>
    <property type="RefSeq protein sequence ID" value="NP_001355823.1"/>
</dbReference>
<dbReference type="UCSC" id="uc001mtg.6">
    <molecule id="P26367-1"/>
    <property type="organism name" value="human"/>
</dbReference>
<dbReference type="AGR" id="HGNC:8620"/>
<dbReference type="CTD" id="5080"/>
<dbReference type="DisGeNET" id="5080"/>
<dbReference type="GeneCards" id="PAX6"/>
<dbReference type="GeneReviews" id="PAX6"/>
<dbReference type="HGNC" id="HGNC:8620">
    <property type="gene designation" value="PAX6"/>
</dbReference>
<dbReference type="HPA" id="ENSG00000007372">
    <property type="expression patterns" value="Group enriched (brain, retina)"/>
</dbReference>
<dbReference type="MalaCards" id="PAX6"/>
<dbReference type="MIM" id="106210">
    <property type="type" value="phenotype"/>
</dbReference>
<dbReference type="MIM" id="120200">
    <property type="type" value="phenotype"/>
</dbReference>
<dbReference type="MIM" id="120430">
    <property type="type" value="phenotype"/>
</dbReference>
<dbReference type="MIM" id="136520">
    <property type="type" value="phenotype"/>
</dbReference>
<dbReference type="MIM" id="148190">
    <property type="type" value="phenotype"/>
</dbReference>
<dbReference type="MIM" id="165550">
    <property type="type" value="phenotype"/>
</dbReference>
<dbReference type="MIM" id="604229">
    <property type="type" value="phenotype"/>
</dbReference>
<dbReference type="MIM" id="607108">
    <property type="type" value="gene"/>
</dbReference>
<dbReference type="MIM" id="617141">
    <property type="type" value="phenotype"/>
</dbReference>
<dbReference type="neXtProt" id="NX_P26367"/>
<dbReference type="OpenTargets" id="ENSG00000007372"/>
<dbReference type="Orphanet" id="1065">
    <property type="disease" value="Aniridia-cerebellar ataxia-intellectual disability syndrome"/>
</dbReference>
<dbReference type="Orphanet" id="2334">
    <property type="disease" value="Autosomal dominant keratitis"/>
</dbReference>
<dbReference type="Orphanet" id="98942">
    <property type="disease" value="Coloboma of choroid and retina"/>
</dbReference>
<dbReference type="Orphanet" id="98943">
    <property type="disease" value="Coloboma of eye lens"/>
</dbReference>
<dbReference type="Orphanet" id="98946">
    <property type="disease" value="Coloboma of eyelid"/>
</dbReference>
<dbReference type="Orphanet" id="98944">
    <property type="disease" value="Coloboma of iris"/>
</dbReference>
<dbReference type="Orphanet" id="98945">
    <property type="disease" value="Coloboma of macula"/>
</dbReference>
<dbReference type="Orphanet" id="98947">
    <property type="disease" value="Coloboma of optic disc"/>
</dbReference>
<dbReference type="Orphanet" id="2253">
    <property type="disease" value="Foveal hypoplasia-presenile cataract syndrome"/>
</dbReference>
<dbReference type="Orphanet" id="250923">
    <property type="disease" value="Isolated aniridia"/>
</dbReference>
<dbReference type="Orphanet" id="35737">
    <property type="disease" value="Morning glory disc anomaly"/>
</dbReference>
<dbReference type="Orphanet" id="708">
    <property type="disease" value="Peters anomaly"/>
</dbReference>
<dbReference type="Orphanet" id="893">
    <property type="disease" value="WAGR syndrome"/>
</dbReference>
<dbReference type="PharmGKB" id="PA32960"/>
<dbReference type="VEuPathDB" id="HostDB:ENSG00000007372"/>
<dbReference type="eggNOG" id="KOG0849">
    <property type="taxonomic scope" value="Eukaryota"/>
</dbReference>
<dbReference type="GeneTree" id="ENSGT00940000155391"/>
<dbReference type="HOGENOM" id="CLU_019281_1_0_1"/>
<dbReference type="InParanoid" id="P26367"/>
<dbReference type="OMA" id="YSHAHST"/>
<dbReference type="OrthoDB" id="3225452at2759"/>
<dbReference type="PAN-GO" id="P26367">
    <property type="GO annotations" value="4 GO annotations based on evolutionary models"/>
</dbReference>
<dbReference type="PhylomeDB" id="P26367"/>
<dbReference type="TreeFam" id="TF320146"/>
<dbReference type="PathwayCommons" id="P26367"/>
<dbReference type="Reactome" id="R-HSA-210745">
    <property type="pathway name" value="Regulation of gene expression in beta cells"/>
</dbReference>
<dbReference type="Reactome" id="R-HSA-381771">
    <property type="pathway name" value="Synthesis, secretion, and inactivation of Glucagon-like Peptide-1 (GLP-1)"/>
</dbReference>
<dbReference type="Reactome" id="R-HSA-400511">
    <property type="pathway name" value="Synthesis, secretion, and inactivation of Glucose-dependent Insulinotropic Polypeptide (GIP)"/>
</dbReference>
<dbReference type="Reactome" id="R-HSA-5617472">
    <property type="pathway name" value="Activation of anterior HOX genes in hindbrain development during early embryogenesis"/>
</dbReference>
<dbReference type="Reactome" id="R-HSA-9823739">
    <property type="pathway name" value="Formation of the anterior neural plate"/>
</dbReference>
<dbReference type="SignaLink" id="P26367"/>
<dbReference type="SIGNOR" id="P26367"/>
<dbReference type="BioGRID-ORCS" id="5080">
    <property type="hits" value="15 hits in 1165 CRISPR screens"/>
</dbReference>
<dbReference type="ChiTaRS" id="PAX6">
    <property type="organism name" value="human"/>
</dbReference>
<dbReference type="EvolutionaryTrace" id="P26367"/>
<dbReference type="GeneWiki" id="PAX6"/>
<dbReference type="GenomeRNAi" id="5080"/>
<dbReference type="Pharos" id="P26367">
    <property type="development level" value="Tbio"/>
</dbReference>
<dbReference type="PRO" id="PR:P26367"/>
<dbReference type="Proteomes" id="UP000005640">
    <property type="component" value="Chromosome 11"/>
</dbReference>
<dbReference type="RNAct" id="P26367">
    <property type="molecule type" value="protein"/>
</dbReference>
<dbReference type="Bgee" id="ENSG00000007372">
    <property type="expression patterns" value="Expressed in palpebral conjunctiva and 148 other cell types or tissues"/>
</dbReference>
<dbReference type="ExpressionAtlas" id="P26367">
    <property type="expression patterns" value="baseline and differential"/>
</dbReference>
<dbReference type="GO" id="GO:0000785">
    <property type="term" value="C:chromatin"/>
    <property type="evidence" value="ECO:0000314"/>
    <property type="project" value="BHF-UCL"/>
</dbReference>
<dbReference type="GO" id="GO:0005737">
    <property type="term" value="C:cytoplasm"/>
    <property type="evidence" value="ECO:0000314"/>
    <property type="project" value="UniProtKB"/>
</dbReference>
<dbReference type="GO" id="GO:0005829">
    <property type="term" value="C:cytosol"/>
    <property type="evidence" value="ECO:0000314"/>
    <property type="project" value="HPA"/>
</dbReference>
<dbReference type="GO" id="GO:0005654">
    <property type="term" value="C:nucleoplasm"/>
    <property type="evidence" value="ECO:0000314"/>
    <property type="project" value="HPA"/>
</dbReference>
<dbReference type="GO" id="GO:0005634">
    <property type="term" value="C:nucleus"/>
    <property type="evidence" value="ECO:0000314"/>
    <property type="project" value="UniProtKB"/>
</dbReference>
<dbReference type="GO" id="GO:0031490">
    <property type="term" value="F:chromatin DNA binding"/>
    <property type="evidence" value="ECO:0007669"/>
    <property type="project" value="Ensembl"/>
</dbReference>
<dbReference type="GO" id="GO:0070410">
    <property type="term" value="F:co-SMAD binding"/>
    <property type="evidence" value="ECO:0007669"/>
    <property type="project" value="Ensembl"/>
</dbReference>
<dbReference type="GO" id="GO:0003677">
    <property type="term" value="F:DNA binding"/>
    <property type="evidence" value="ECO:0000304"/>
    <property type="project" value="ProtInc"/>
</dbReference>
<dbReference type="GO" id="GO:0001228">
    <property type="term" value="F:DNA-binding transcription activator activity, RNA polymerase II-specific"/>
    <property type="evidence" value="ECO:0000314"/>
    <property type="project" value="BHF-UCL"/>
</dbReference>
<dbReference type="GO" id="GO:0003700">
    <property type="term" value="F:DNA-binding transcription factor activity"/>
    <property type="evidence" value="ECO:0000304"/>
    <property type="project" value="ProtInc"/>
</dbReference>
<dbReference type="GO" id="GO:0000981">
    <property type="term" value="F:DNA-binding transcription factor activity, RNA polymerase II-specific"/>
    <property type="evidence" value="ECO:0000314"/>
    <property type="project" value="BHF-UCL"/>
</dbReference>
<dbReference type="GO" id="GO:0001227">
    <property type="term" value="F:DNA-binding transcription repressor activity, RNA polymerase II-specific"/>
    <property type="evidence" value="ECO:0007669"/>
    <property type="project" value="Ensembl"/>
</dbReference>
<dbReference type="GO" id="GO:0035035">
    <property type="term" value="F:histone acetyltransferase binding"/>
    <property type="evidence" value="ECO:0000250"/>
    <property type="project" value="BHF-UCL"/>
</dbReference>
<dbReference type="GO" id="GO:0071837">
    <property type="term" value="F:HMG box domain binding"/>
    <property type="evidence" value="ECO:0007669"/>
    <property type="project" value="Ensembl"/>
</dbReference>
<dbReference type="GO" id="GO:0019901">
    <property type="term" value="F:protein kinase binding"/>
    <property type="evidence" value="ECO:0000250"/>
    <property type="project" value="BHF-UCL"/>
</dbReference>
<dbReference type="GO" id="GO:0070412">
    <property type="term" value="F:R-SMAD binding"/>
    <property type="evidence" value="ECO:0000353"/>
    <property type="project" value="BHF-UCL"/>
</dbReference>
<dbReference type="GO" id="GO:0003723">
    <property type="term" value="F:RNA binding"/>
    <property type="evidence" value="ECO:0007669"/>
    <property type="project" value="Ensembl"/>
</dbReference>
<dbReference type="GO" id="GO:0000978">
    <property type="term" value="F:RNA polymerase II cis-regulatory region sequence-specific DNA binding"/>
    <property type="evidence" value="ECO:0000314"/>
    <property type="project" value="BHF-UCL"/>
</dbReference>
<dbReference type="GO" id="GO:0000979">
    <property type="term" value="F:RNA polymerase II core promoter sequence-specific DNA binding"/>
    <property type="evidence" value="ECO:0007669"/>
    <property type="project" value="Ensembl"/>
</dbReference>
<dbReference type="GO" id="GO:1990837">
    <property type="term" value="F:sequence-specific double-stranded DNA binding"/>
    <property type="evidence" value="ECO:0000314"/>
    <property type="project" value="ARUK-UCL"/>
</dbReference>
<dbReference type="GO" id="GO:0000976">
    <property type="term" value="F:transcription cis-regulatory region binding"/>
    <property type="evidence" value="ECO:0000250"/>
    <property type="project" value="UniProtKB"/>
</dbReference>
<dbReference type="GO" id="GO:0001221">
    <property type="term" value="F:transcription coregulator binding"/>
    <property type="evidence" value="ECO:0000250"/>
    <property type="project" value="BHF-UCL"/>
</dbReference>
<dbReference type="GO" id="GO:0031625">
    <property type="term" value="F:ubiquitin protein ligase binding"/>
    <property type="evidence" value="ECO:0007669"/>
    <property type="project" value="Ensembl"/>
</dbReference>
<dbReference type="GO" id="GO:0009887">
    <property type="term" value="P:animal organ morphogenesis"/>
    <property type="evidence" value="ECO:0000304"/>
    <property type="project" value="ProtInc"/>
</dbReference>
<dbReference type="GO" id="GO:0048708">
    <property type="term" value="P:astrocyte differentiation"/>
    <property type="evidence" value="ECO:0007669"/>
    <property type="project" value="Ensembl"/>
</dbReference>
<dbReference type="GO" id="GO:0007411">
    <property type="term" value="P:axon guidance"/>
    <property type="evidence" value="ECO:0007669"/>
    <property type="project" value="Ensembl"/>
</dbReference>
<dbReference type="GO" id="GO:0001568">
    <property type="term" value="P:blood vessel development"/>
    <property type="evidence" value="ECO:0000315"/>
    <property type="project" value="DFLAT"/>
</dbReference>
<dbReference type="GO" id="GO:0007420">
    <property type="term" value="P:brain development"/>
    <property type="evidence" value="ECO:0000318"/>
    <property type="project" value="GO_Central"/>
</dbReference>
<dbReference type="GO" id="GO:0001709">
    <property type="term" value="P:cell fate determination"/>
    <property type="evidence" value="ECO:0007669"/>
    <property type="project" value="Ensembl"/>
</dbReference>
<dbReference type="GO" id="GO:1990830">
    <property type="term" value="P:cellular response to leukemia inhibitory factor"/>
    <property type="evidence" value="ECO:0007669"/>
    <property type="project" value="Ensembl"/>
</dbReference>
<dbReference type="GO" id="GO:0007417">
    <property type="term" value="P:central nervous system development"/>
    <property type="evidence" value="ECO:0000304"/>
    <property type="project" value="ProtInc"/>
</dbReference>
<dbReference type="GO" id="GO:0021796">
    <property type="term" value="P:cerebral cortex regionalization"/>
    <property type="evidence" value="ECO:0007669"/>
    <property type="project" value="Ensembl"/>
</dbReference>
<dbReference type="GO" id="GO:0006338">
    <property type="term" value="P:chromatin remodeling"/>
    <property type="evidence" value="ECO:0007669"/>
    <property type="project" value="Ensembl"/>
</dbReference>
<dbReference type="GO" id="GO:0021902">
    <property type="term" value="P:commitment of neuronal cell to specific neuron type in forebrain"/>
    <property type="evidence" value="ECO:0007669"/>
    <property type="project" value="Ensembl"/>
</dbReference>
<dbReference type="GO" id="GO:0061303">
    <property type="term" value="P:cornea development in camera-type eye"/>
    <property type="evidence" value="ECO:0000315"/>
    <property type="project" value="DFLAT"/>
</dbReference>
<dbReference type="GO" id="GO:0009950">
    <property type="term" value="P:dorsal/ventral axis specification"/>
    <property type="evidence" value="ECO:0007669"/>
    <property type="project" value="Ensembl"/>
</dbReference>
<dbReference type="GO" id="GO:0048596">
    <property type="term" value="P:embryonic camera-type eye morphogenesis"/>
    <property type="evidence" value="ECO:0007669"/>
    <property type="project" value="Ensembl"/>
</dbReference>
<dbReference type="GO" id="GO:0000132">
    <property type="term" value="P:establishment of mitotic spindle orientation"/>
    <property type="evidence" value="ECO:0007669"/>
    <property type="project" value="Ensembl"/>
</dbReference>
<dbReference type="GO" id="GO:0001654">
    <property type="term" value="P:eye development"/>
    <property type="evidence" value="ECO:0000304"/>
    <property type="project" value="ProtInc"/>
</dbReference>
<dbReference type="GO" id="GO:0042462">
    <property type="term" value="P:eye photoreceptor cell development"/>
    <property type="evidence" value="ECO:0007669"/>
    <property type="project" value="Ensembl"/>
</dbReference>
<dbReference type="GO" id="GO:0030900">
    <property type="term" value="P:forebrain development"/>
    <property type="evidence" value="ECO:0000318"/>
    <property type="project" value="GO_Central"/>
</dbReference>
<dbReference type="GO" id="GO:0021798">
    <property type="term" value="P:forebrain dorsal/ventral pattern formation"/>
    <property type="evidence" value="ECO:0007669"/>
    <property type="project" value="Ensembl"/>
</dbReference>
<dbReference type="GO" id="GO:0021905">
    <property type="term" value="P:forebrain-midbrain boundary formation"/>
    <property type="evidence" value="ECO:0007669"/>
    <property type="project" value="Ensembl"/>
</dbReference>
<dbReference type="GO" id="GO:0042593">
    <property type="term" value="P:glucose homeostasis"/>
    <property type="evidence" value="ECO:0000315"/>
    <property type="project" value="DFLAT"/>
</dbReference>
<dbReference type="GO" id="GO:0021986">
    <property type="term" value="P:habenula development"/>
    <property type="evidence" value="ECO:0007669"/>
    <property type="project" value="Ensembl"/>
</dbReference>
<dbReference type="GO" id="GO:0061072">
    <property type="term" value="P:iris morphogenesis"/>
    <property type="evidence" value="ECO:0000315"/>
    <property type="project" value="DFLAT"/>
</dbReference>
<dbReference type="GO" id="GO:0030216">
    <property type="term" value="P:keratinocyte differentiation"/>
    <property type="evidence" value="ECO:0007669"/>
    <property type="project" value="Ensembl"/>
</dbReference>
<dbReference type="GO" id="GO:0032808">
    <property type="term" value="P:lacrimal gland development"/>
    <property type="evidence" value="ECO:0007669"/>
    <property type="project" value="Ensembl"/>
</dbReference>
<dbReference type="GO" id="GO:0002088">
    <property type="term" value="P:lens development in camera-type eye"/>
    <property type="evidence" value="ECO:0007669"/>
    <property type="project" value="Ensembl"/>
</dbReference>
<dbReference type="GO" id="GO:0050680">
    <property type="term" value="P:negative regulation of epithelial cell proliferation"/>
    <property type="evidence" value="ECO:0007669"/>
    <property type="project" value="Ensembl"/>
</dbReference>
<dbReference type="GO" id="GO:0007406">
    <property type="term" value="P:negative regulation of neuroblast proliferation"/>
    <property type="evidence" value="ECO:0007669"/>
    <property type="project" value="Ensembl"/>
</dbReference>
<dbReference type="GO" id="GO:0050768">
    <property type="term" value="P:negative regulation of neurogenesis"/>
    <property type="evidence" value="ECO:0000250"/>
    <property type="project" value="UniProtKB"/>
</dbReference>
<dbReference type="GO" id="GO:0045665">
    <property type="term" value="P:negative regulation of neuron differentiation"/>
    <property type="evidence" value="ECO:0007669"/>
    <property type="project" value="Ensembl"/>
</dbReference>
<dbReference type="GO" id="GO:0000122">
    <property type="term" value="P:negative regulation of transcription by RNA polymerase II"/>
    <property type="evidence" value="ECO:0000250"/>
    <property type="project" value="UniProtKB"/>
</dbReference>
<dbReference type="GO" id="GO:0007399">
    <property type="term" value="P:nervous system development"/>
    <property type="evidence" value="ECO:0000315"/>
    <property type="project" value="BHF-UCL"/>
</dbReference>
<dbReference type="GO" id="GO:0007405">
    <property type="term" value="P:neuroblast proliferation"/>
    <property type="evidence" value="ECO:0007669"/>
    <property type="project" value="Ensembl"/>
</dbReference>
<dbReference type="GO" id="GO:0048663">
    <property type="term" value="P:neuron fate commitment"/>
    <property type="evidence" value="ECO:0000303"/>
    <property type="project" value="UniProtKB"/>
</dbReference>
<dbReference type="GO" id="GO:0001764">
    <property type="term" value="P:neuron migration"/>
    <property type="evidence" value="ECO:0007669"/>
    <property type="project" value="Ensembl"/>
</dbReference>
<dbReference type="GO" id="GO:0021778">
    <property type="term" value="P:oligodendrocyte cell fate specification"/>
    <property type="evidence" value="ECO:0007669"/>
    <property type="project" value="Ensembl"/>
</dbReference>
<dbReference type="GO" id="GO:0003322">
    <property type="term" value="P:pancreatic A cell development"/>
    <property type="evidence" value="ECO:0000315"/>
    <property type="project" value="BHF-UCL"/>
</dbReference>
<dbReference type="GO" id="GO:0021983">
    <property type="term" value="P:pituitary gland development"/>
    <property type="evidence" value="ECO:0007669"/>
    <property type="project" value="Ensembl"/>
</dbReference>
<dbReference type="GO" id="GO:0045893">
    <property type="term" value="P:positive regulation of DNA-templated transcription"/>
    <property type="evidence" value="ECO:0000314"/>
    <property type="project" value="UniProtKB"/>
</dbReference>
<dbReference type="GO" id="GO:0030858">
    <property type="term" value="P:positive regulation of epithelial cell differentiation"/>
    <property type="evidence" value="ECO:0007669"/>
    <property type="project" value="Ensembl"/>
</dbReference>
<dbReference type="GO" id="GO:0010628">
    <property type="term" value="P:positive regulation of gene expression"/>
    <property type="evidence" value="ECO:0000315"/>
    <property type="project" value="BHF-UCL"/>
</dbReference>
<dbReference type="GO" id="GO:1902895">
    <property type="term" value="P:positive regulation of miRNA transcription"/>
    <property type="evidence" value="ECO:0000314"/>
    <property type="project" value="BHF-UCL"/>
</dbReference>
<dbReference type="GO" id="GO:0002052">
    <property type="term" value="P:positive regulation of neuroblast proliferation"/>
    <property type="evidence" value="ECO:0007669"/>
    <property type="project" value="Ensembl"/>
</dbReference>
<dbReference type="GO" id="GO:0045944">
    <property type="term" value="P:positive regulation of transcription by RNA polymerase II"/>
    <property type="evidence" value="ECO:0000315"/>
    <property type="project" value="BHF-UCL"/>
</dbReference>
<dbReference type="GO" id="GO:0033365">
    <property type="term" value="P:protein localization to organelle"/>
    <property type="evidence" value="ECO:0007669"/>
    <property type="project" value="Ensembl"/>
</dbReference>
<dbReference type="GO" id="GO:0009786">
    <property type="term" value="P:regulation of asymmetric cell division"/>
    <property type="evidence" value="ECO:0007669"/>
    <property type="project" value="Ensembl"/>
</dbReference>
<dbReference type="GO" id="GO:0030334">
    <property type="term" value="P:regulation of cell migration"/>
    <property type="evidence" value="ECO:0007669"/>
    <property type="project" value="Ensembl"/>
</dbReference>
<dbReference type="GO" id="GO:0048505">
    <property type="term" value="P:regulation of timing of cell differentiation"/>
    <property type="evidence" value="ECO:0007669"/>
    <property type="project" value="Ensembl"/>
</dbReference>
<dbReference type="GO" id="GO:0006357">
    <property type="term" value="P:regulation of transcription by RNA polymerase II"/>
    <property type="evidence" value="ECO:0000318"/>
    <property type="project" value="GO_Central"/>
</dbReference>
<dbReference type="GO" id="GO:0009611">
    <property type="term" value="P:response to wounding"/>
    <property type="evidence" value="ECO:0000270"/>
    <property type="project" value="UniProtKB"/>
</dbReference>
<dbReference type="GO" id="GO:0060041">
    <property type="term" value="P:retina development in camera-type eye"/>
    <property type="evidence" value="ECO:0000318"/>
    <property type="project" value="GO_Central"/>
</dbReference>
<dbReference type="GO" id="GO:0007435">
    <property type="term" value="P:salivary gland morphogenesis"/>
    <property type="evidence" value="ECO:0007669"/>
    <property type="project" value="Ensembl"/>
</dbReference>
<dbReference type="GO" id="GO:0007423">
    <property type="term" value="P:sensory organ development"/>
    <property type="evidence" value="ECO:0000318"/>
    <property type="project" value="GO_Central"/>
</dbReference>
<dbReference type="GO" id="GO:0023019">
    <property type="term" value="P:signal transduction involved in regulation of gene expression"/>
    <property type="evidence" value="ECO:0007669"/>
    <property type="project" value="Ensembl"/>
</dbReference>
<dbReference type="GO" id="GO:0007224">
    <property type="term" value="P:smoothened signaling pathway"/>
    <property type="evidence" value="ECO:0007669"/>
    <property type="project" value="Ensembl"/>
</dbReference>
<dbReference type="GO" id="GO:0006366">
    <property type="term" value="P:transcription by RNA polymerase II"/>
    <property type="evidence" value="ECO:0007669"/>
    <property type="project" value="Ensembl"/>
</dbReference>
<dbReference type="GO" id="GO:0003309">
    <property type="term" value="P:type B pancreatic cell differentiation"/>
    <property type="evidence" value="ECO:0000318"/>
    <property type="project" value="GO_Central"/>
</dbReference>
<dbReference type="GO" id="GO:0021517">
    <property type="term" value="P:ventral spinal cord development"/>
    <property type="evidence" value="ECO:0000250"/>
    <property type="project" value="UniProtKB"/>
</dbReference>
<dbReference type="GO" id="GO:0007601">
    <property type="term" value="P:visual perception"/>
    <property type="evidence" value="ECO:0000304"/>
    <property type="project" value="ProtInc"/>
</dbReference>
<dbReference type="CDD" id="cd00086">
    <property type="entry name" value="homeodomain"/>
    <property type="match status" value="1"/>
</dbReference>
<dbReference type="CDD" id="cd00131">
    <property type="entry name" value="PAX"/>
    <property type="match status" value="1"/>
</dbReference>
<dbReference type="FunFam" id="1.10.10.10:FF:000003">
    <property type="entry name" value="Paired box protein Pax-6"/>
    <property type="match status" value="1"/>
</dbReference>
<dbReference type="FunFam" id="1.10.10.10:FF:000069">
    <property type="entry name" value="Paired box protein Pax-6"/>
    <property type="match status" value="1"/>
</dbReference>
<dbReference type="FunFam" id="1.10.10.60:FF:000028">
    <property type="entry name" value="Paired box protein Pax-6"/>
    <property type="match status" value="1"/>
</dbReference>
<dbReference type="Gene3D" id="1.10.10.60">
    <property type="entry name" value="Homeodomain-like"/>
    <property type="match status" value="1"/>
</dbReference>
<dbReference type="Gene3D" id="1.10.10.10">
    <property type="entry name" value="Winged helix-like DNA-binding domain superfamily/Winged helix DNA-binding domain"/>
    <property type="match status" value="2"/>
</dbReference>
<dbReference type="IDEAL" id="IID00197"/>
<dbReference type="InterPro" id="IPR001356">
    <property type="entry name" value="HD"/>
</dbReference>
<dbReference type="InterPro" id="IPR017970">
    <property type="entry name" value="Homeobox_CS"/>
</dbReference>
<dbReference type="InterPro" id="IPR009057">
    <property type="entry name" value="Homeodomain-like_sf"/>
</dbReference>
<dbReference type="InterPro" id="IPR043182">
    <property type="entry name" value="PAIRED_DNA-bd_dom"/>
</dbReference>
<dbReference type="InterPro" id="IPR001523">
    <property type="entry name" value="Paired_dom"/>
</dbReference>
<dbReference type="InterPro" id="IPR043565">
    <property type="entry name" value="PAX_fam"/>
</dbReference>
<dbReference type="InterPro" id="IPR036388">
    <property type="entry name" value="WH-like_DNA-bd_sf"/>
</dbReference>
<dbReference type="PANTHER" id="PTHR45636:SF48">
    <property type="entry name" value="PAIRED BOX PROTEIN PAX-6"/>
    <property type="match status" value="1"/>
</dbReference>
<dbReference type="PANTHER" id="PTHR45636">
    <property type="entry name" value="PAIRED BOX PROTEIN PAX-6-RELATED-RELATED"/>
    <property type="match status" value="1"/>
</dbReference>
<dbReference type="Pfam" id="PF00046">
    <property type="entry name" value="Homeodomain"/>
    <property type="match status" value="1"/>
</dbReference>
<dbReference type="Pfam" id="PF00292">
    <property type="entry name" value="PAX"/>
    <property type="match status" value="1"/>
</dbReference>
<dbReference type="PRINTS" id="PR00027">
    <property type="entry name" value="PAIREDBOX"/>
</dbReference>
<dbReference type="SMART" id="SM00389">
    <property type="entry name" value="HOX"/>
    <property type="match status" value="1"/>
</dbReference>
<dbReference type="SMART" id="SM00351">
    <property type="entry name" value="PAX"/>
    <property type="match status" value="1"/>
</dbReference>
<dbReference type="SUPFAM" id="SSF46689">
    <property type="entry name" value="Homeodomain-like"/>
    <property type="match status" value="2"/>
</dbReference>
<dbReference type="PROSITE" id="PS00027">
    <property type="entry name" value="HOMEOBOX_1"/>
    <property type="match status" value="1"/>
</dbReference>
<dbReference type="PROSITE" id="PS50071">
    <property type="entry name" value="HOMEOBOX_2"/>
    <property type="match status" value="1"/>
</dbReference>
<dbReference type="PROSITE" id="PS00034">
    <property type="entry name" value="PAIRED_1"/>
    <property type="match status" value="1"/>
</dbReference>
<dbReference type="PROSITE" id="PS51057">
    <property type="entry name" value="PAIRED_2"/>
    <property type="match status" value="1"/>
</dbReference>
<evidence type="ECO:0000250" key="1"/>
<evidence type="ECO:0000250" key="2">
    <source>
        <dbReference type="UniProtKB" id="P63015"/>
    </source>
</evidence>
<evidence type="ECO:0000250" key="3">
    <source>
        <dbReference type="UniProtKB" id="P63016"/>
    </source>
</evidence>
<evidence type="ECO:0000255" key="4">
    <source>
        <dbReference type="PROSITE-ProRule" id="PRU00108"/>
    </source>
</evidence>
<evidence type="ECO:0000255" key="5">
    <source>
        <dbReference type="PROSITE-ProRule" id="PRU00381"/>
    </source>
</evidence>
<evidence type="ECO:0000256" key="6">
    <source>
        <dbReference type="SAM" id="MobiDB-lite"/>
    </source>
</evidence>
<evidence type="ECO:0000269" key="7">
    <source>
    </source>
</evidence>
<evidence type="ECO:0000269" key="8">
    <source>
    </source>
</evidence>
<evidence type="ECO:0000269" key="9">
    <source>
    </source>
</evidence>
<evidence type="ECO:0000269" key="10">
    <source>
    </source>
</evidence>
<evidence type="ECO:0000269" key="11">
    <source>
    </source>
</evidence>
<evidence type="ECO:0000269" key="12">
    <source>
    </source>
</evidence>
<evidence type="ECO:0000269" key="13">
    <source>
    </source>
</evidence>
<evidence type="ECO:0000269" key="14">
    <source>
    </source>
</evidence>
<evidence type="ECO:0000269" key="15">
    <source>
    </source>
</evidence>
<evidence type="ECO:0000269" key="16">
    <source>
    </source>
</evidence>
<evidence type="ECO:0000269" key="17">
    <source>
    </source>
</evidence>
<evidence type="ECO:0000269" key="18">
    <source>
    </source>
</evidence>
<evidence type="ECO:0000269" key="19">
    <source>
    </source>
</evidence>
<evidence type="ECO:0000269" key="20">
    <source>
    </source>
</evidence>
<evidence type="ECO:0000269" key="21">
    <source>
    </source>
</evidence>
<evidence type="ECO:0000269" key="22">
    <source>
    </source>
</evidence>
<evidence type="ECO:0000269" key="23">
    <source>
    </source>
</evidence>
<evidence type="ECO:0000269" key="24">
    <source>
    </source>
</evidence>
<evidence type="ECO:0000269" key="25">
    <source>
    </source>
</evidence>
<evidence type="ECO:0000269" key="26">
    <source>
    </source>
</evidence>
<evidence type="ECO:0000269" key="27">
    <source>
    </source>
</evidence>
<evidence type="ECO:0000269" key="28">
    <source>
    </source>
</evidence>
<evidence type="ECO:0000269" key="29">
    <source>
    </source>
</evidence>
<evidence type="ECO:0000269" key="30">
    <source>
    </source>
</evidence>
<evidence type="ECO:0000269" key="31">
    <source>
    </source>
</evidence>
<evidence type="ECO:0000269" key="32">
    <source>
    </source>
</evidence>
<evidence type="ECO:0000269" key="33">
    <source>
    </source>
</evidence>
<evidence type="ECO:0000269" key="34">
    <source>
    </source>
</evidence>
<evidence type="ECO:0000269" key="35">
    <source ref="27"/>
</evidence>
<evidence type="ECO:0000269" key="36">
    <source ref="28"/>
</evidence>
<evidence type="ECO:0000303" key="37">
    <source>
    </source>
</evidence>
<evidence type="ECO:0000305" key="38"/>
<evidence type="ECO:0007829" key="39">
    <source>
        <dbReference type="PDB" id="2CUE"/>
    </source>
</evidence>
<evidence type="ECO:0007829" key="40">
    <source>
        <dbReference type="PDB" id="6PAX"/>
    </source>
</evidence>
<name>PAX6_HUMAN</name>
<protein>
    <recommendedName>
        <fullName>Paired box protein Pax-6</fullName>
    </recommendedName>
    <alternativeName>
        <fullName>Aniridia type II protein</fullName>
    </alternativeName>
    <alternativeName>
        <fullName>Oculorhombin</fullName>
    </alternativeName>
</protein>
<accession>P26367</accession>
<accession>Q6N006</accession>
<accession>Q99413</accession>
<comment type="function">
    <text evidence="1 2">Transcription factor with important functions in the development of the eye, nose, central nervous system and pancreas. Required for the differentiation of pancreatic islet alpha cells (By similarity). Competes with PAX4 in binding to a common element in the glucagon, insulin and somatostatin promoters. Regulates specification of the ventral neuron subtypes by establishing the correct progenitor domains (By similarity). Acts as a transcriptional repressor of NFATC1-mediated gene expression (By similarity).</text>
</comment>
<comment type="subunit">
    <text evidence="2">Interacts with MAF and MAFB (By similarity). Interacts with TRIM11; this interaction leads to ubiquitination and proteasomal degradation, as well as inhibition of transactivation, possibly in part by preventing PAX6 binding to consensus DNA sequences (By similarity). Interacts with TLE6/GRG6 (By similarity).</text>
</comment>
<comment type="interaction">
    <interactant intactId="EBI-747278">
        <id>P26367</id>
    </interactant>
    <interactant intactId="EBI-11954993">
        <id>Q8WYK0</id>
        <label>ACOT12</label>
    </interactant>
    <organismsDiffer>false</organismsDiffer>
    <experiments>3</experiments>
</comment>
<comment type="interaction">
    <interactant intactId="EBI-747278">
        <id>P26367</id>
    </interactant>
    <interactant intactId="EBI-8643161">
        <id>Q9NX04</id>
        <label>AIRIM</label>
    </interactant>
    <organismsDiffer>false</organismsDiffer>
    <experiments>3</experiments>
</comment>
<comment type="interaction">
    <interactant intactId="EBI-747278">
        <id>P26367</id>
    </interactant>
    <interactant intactId="EBI-541426">
        <id>Q9BXS5</id>
        <label>AP1M1</label>
    </interactant>
    <organismsDiffer>false</organismsDiffer>
    <experiments>3</experiments>
</comment>
<comment type="interaction">
    <interactant intactId="EBI-747278">
        <id>P26367</id>
    </interactant>
    <interactant intactId="EBI-711158">
        <id>O95376</id>
        <label>ARIH2</label>
    </interactant>
    <organismsDiffer>false</organismsDiffer>
    <experiments>3</experiments>
</comment>
<comment type="interaction">
    <interactant intactId="EBI-747278">
        <id>P26367</id>
    </interactant>
    <interactant intactId="EBI-3923949">
        <id>Q8N8Y2</id>
        <label>ATP6V0D2</label>
    </interactant>
    <organismsDiffer>false</organismsDiffer>
    <experiments>3</experiments>
</comment>
<comment type="interaction">
    <interactant intactId="EBI-747278">
        <id>P26367</id>
    </interactant>
    <interactant intactId="EBI-10270867">
        <id>Q8NEY4-2</id>
        <label>ATP6V1C2</label>
    </interactant>
    <organismsDiffer>false</organismsDiffer>
    <experiments>3</experiments>
</comment>
<comment type="interaction">
    <interactant intactId="EBI-747278">
        <id>P26367</id>
    </interactant>
    <interactant intactId="EBI-11524452">
        <id>Q8N9N5-2</id>
        <label>BANP</label>
    </interactant>
    <organismsDiffer>false</organismsDiffer>
    <experiments>3</experiments>
</comment>
<comment type="interaction">
    <interactant intactId="EBI-747278">
        <id>P26367</id>
    </interactant>
    <interactant intactId="EBI-10247136">
        <id>Q5TBC7</id>
        <label>BCL2L15</label>
    </interactant>
    <organismsDiffer>false</organismsDiffer>
    <experiments>3</experiments>
</comment>
<comment type="interaction">
    <interactant intactId="EBI-747278">
        <id>P26367</id>
    </interactant>
    <interactant intactId="EBI-739879">
        <id>Q53TS8</id>
        <label>C2CD6</label>
    </interactant>
    <organismsDiffer>false</organismsDiffer>
    <experiments>3</experiments>
</comment>
<comment type="interaction">
    <interactant intactId="EBI-747278">
        <id>P26367</id>
    </interactant>
    <interactant intactId="EBI-10261970">
        <id>Q8IW40</id>
        <label>CCDC103</label>
    </interactant>
    <organismsDiffer>false</organismsDiffer>
    <experiments>3</experiments>
</comment>
<comment type="interaction">
    <interactant intactId="EBI-747278">
        <id>P26367</id>
    </interactant>
    <interactant intactId="EBI-1045350">
        <id>Q16204</id>
        <label>CCDC6</label>
    </interactant>
    <organismsDiffer>false</organismsDiffer>
    <experiments>3</experiments>
</comment>
<comment type="interaction">
    <interactant intactId="EBI-747278">
        <id>P26367</id>
    </interactant>
    <interactant intactId="EBI-7783416">
        <id>Q9Y258</id>
        <label>CCL26</label>
    </interactant>
    <organismsDiffer>false</organismsDiffer>
    <experiments>3</experiments>
</comment>
<comment type="interaction">
    <interactant intactId="EBI-747278">
        <id>P26367</id>
    </interactant>
    <interactant intactId="EBI-1245761">
        <id>Q00526</id>
        <label>CDK3</label>
    </interactant>
    <organismsDiffer>false</organismsDiffer>
    <experiments>3</experiments>
</comment>
<comment type="interaction">
    <interactant intactId="EBI-747278">
        <id>P26367</id>
    </interactant>
    <interactant intactId="EBI-723153">
        <id>Q9UFW8</id>
        <label>CGGBP1</label>
    </interactant>
    <organismsDiffer>false</organismsDiffer>
    <experiments>3</experiments>
</comment>
<comment type="interaction">
    <interactant intactId="EBI-747278">
        <id>P26367</id>
    </interactant>
    <interactant intactId="EBI-1020839">
        <id>Q13111</id>
        <label>CHAF1A</label>
    </interactant>
    <organismsDiffer>false</organismsDiffer>
    <experiments>3</experiments>
</comment>
<comment type="interaction">
    <interactant intactId="EBI-747278">
        <id>P26367</id>
    </interactant>
    <interactant intactId="EBI-10292696">
        <id>Q96Q77</id>
        <label>CIB3</label>
    </interactant>
    <organismsDiffer>false</organismsDiffer>
    <experiments>3</experiments>
</comment>
<comment type="interaction">
    <interactant intactId="EBI-747278">
        <id>P26367</id>
    </interactant>
    <interactant intactId="EBI-739784">
        <id>Q9BW66</id>
        <label>CINP</label>
    </interactant>
    <organismsDiffer>false</organismsDiffer>
    <experiments>3</experiments>
</comment>
<comment type="interaction">
    <interactant intactId="EBI-747278">
        <id>P26367</id>
    </interactant>
    <interactant intactId="EBI-456371">
        <id>P61024</id>
        <label>CKS1B</label>
    </interactant>
    <organismsDiffer>false</organismsDiffer>
    <experiments>3</experiments>
</comment>
<comment type="interaction">
    <interactant intactId="EBI-747278">
        <id>P26367</id>
    </interactant>
    <interactant intactId="EBI-347804">
        <id>P68400</id>
        <label>CSNK2A1</label>
    </interactant>
    <organismsDiffer>false</organismsDiffer>
    <experiments>5</experiments>
</comment>
<comment type="interaction">
    <interactant intactId="EBI-747278">
        <id>P26367</id>
    </interactant>
    <interactant intactId="EBI-11962928">
        <id>Q9UI47-2</id>
        <label>CTNNA3</label>
    </interactant>
    <organismsDiffer>false</organismsDiffer>
    <experiments>3</experiments>
</comment>
<comment type="interaction">
    <interactant intactId="EBI-747278">
        <id>P26367</id>
    </interactant>
    <interactant intactId="EBI-12024320">
        <id>Q8TB03</id>
        <label>CXorf38</label>
    </interactant>
    <organismsDiffer>false</organismsDiffer>
    <experiments>3</experiments>
</comment>
<comment type="interaction">
    <interactant intactId="EBI-747278">
        <id>P26367</id>
    </interactant>
    <interactant intactId="EBI-741925">
        <id>P49366</id>
        <label>DHPS</label>
    </interactant>
    <organismsDiffer>false</organismsDiffer>
    <experiments>3</experiments>
</comment>
<comment type="interaction">
    <interactant intactId="EBI-747278">
        <id>P26367</id>
    </interactant>
    <interactant intactId="EBI-769261">
        <id>Q96JC9</id>
        <label>EAF1</label>
    </interactant>
    <organismsDiffer>false</organismsDiffer>
    <experiments>3</experiments>
</comment>
<comment type="interaction">
    <interactant intactId="EBI-747278">
        <id>P26367</id>
    </interactant>
    <interactant intactId="EBI-743105">
        <id>Q5JVL4</id>
        <label>EFHC1</label>
    </interactant>
    <organismsDiffer>false</organismsDiffer>
    <experiments>3</experiments>
</comment>
<comment type="interaction">
    <interactant intactId="EBI-747278">
        <id>P26367</id>
    </interactant>
    <interactant intactId="EBI-750700">
        <id>Q8N9N8</id>
        <label>EIF1AD</label>
    </interactant>
    <organismsDiffer>false</organismsDiffer>
    <experiments>3</experiments>
</comment>
<comment type="interaction">
    <interactant intactId="EBI-747278">
        <id>P26367</id>
    </interactant>
    <interactant intactId="EBI-12001340">
        <id>P62508-3</id>
        <label>ESRRG</label>
    </interactant>
    <organismsDiffer>false</organismsDiffer>
    <experiments>3</experiments>
</comment>
<comment type="interaction">
    <interactant intactId="EBI-747278">
        <id>P26367</id>
    </interactant>
    <interactant intactId="EBI-742802">
        <id>Q9Y247</id>
        <label>FAM50B</label>
    </interactant>
    <organismsDiffer>false</organismsDiffer>
    <experiments>3</experiments>
</comment>
<comment type="interaction">
    <interactant intactId="EBI-747278">
        <id>P26367</id>
    </interactant>
    <interactant intactId="EBI-7960826">
        <id>Q8NHY3</id>
        <label>GAS2L2</label>
    </interactant>
    <organismsDiffer>false</organismsDiffer>
    <experiments>3</experiments>
</comment>
<comment type="interaction">
    <interactant intactId="EBI-747278">
        <id>P26367</id>
    </interactant>
    <interactant intactId="EBI-10188645">
        <id>O75603</id>
        <label>GCM2</label>
    </interactant>
    <organismsDiffer>false</organismsDiffer>
    <experiments>3</experiments>
</comment>
<comment type="interaction">
    <interactant intactId="EBI-747278">
        <id>P26367</id>
    </interactant>
    <interactant intactId="EBI-443648">
        <id>O14893</id>
        <label>GEMIN2</label>
    </interactant>
    <organismsDiffer>false</organismsDiffer>
    <experiments>3</experiments>
</comment>
<comment type="interaction">
    <interactant intactId="EBI-747278">
        <id>P26367</id>
    </interactant>
    <interactant intactId="EBI-751540">
        <id>O95872</id>
        <label>GPANK1</label>
    </interactant>
    <organismsDiffer>false</organismsDiffer>
    <experiments>3</experiments>
</comment>
<comment type="interaction">
    <interactant intactId="EBI-747278">
        <id>P26367</id>
    </interactant>
    <interactant intactId="EBI-10219092">
        <id>Q6ISB3</id>
        <label>GRHL2</label>
    </interactant>
    <organismsDiffer>false</organismsDiffer>
    <experiments>3</experiments>
</comment>
<comment type="interaction">
    <interactant intactId="EBI-747278">
        <id>P26367</id>
    </interactant>
    <interactant intactId="EBI-740220">
        <id>O14964</id>
        <label>HGS</label>
    </interactant>
    <organismsDiffer>false</organismsDiffer>
    <experiments>3</experiments>
</comment>
<comment type="interaction">
    <interactant intactId="EBI-747278">
        <id>P26367</id>
    </interactant>
    <interactant intactId="EBI-2549423">
        <id>Q6NT76</id>
        <label>HMBOX1</label>
    </interactant>
    <organismsDiffer>false</organismsDiffer>
    <experiments>3</experiments>
</comment>
<comment type="interaction">
    <interactant intactId="EBI-747278">
        <id>P26367</id>
    </interactant>
    <interactant intactId="EBI-2214136">
        <id>O15347</id>
        <label>HMGB3</label>
    </interactant>
    <organismsDiffer>false</organismsDiffer>
    <experiments>3</experiments>
</comment>
<comment type="interaction">
    <interactant intactId="EBI-747278">
        <id>P26367</id>
    </interactant>
    <interactant intactId="EBI-357966">
        <id>P07910</id>
        <label>HNRNPC</label>
    </interactant>
    <organismsDiffer>false</organismsDiffer>
    <experiments>3</experiments>
</comment>
<comment type="interaction">
    <interactant intactId="EBI-747278">
        <id>P26367</id>
    </interactant>
    <interactant intactId="EBI-748420">
        <id>Q9NSC5</id>
        <label>HOMER3</label>
    </interactant>
    <organismsDiffer>false</organismsDiffer>
    <experiments>6</experiments>
</comment>
<comment type="interaction">
    <interactant intactId="EBI-747278">
        <id>P26367</id>
    </interactant>
    <interactant intactId="EBI-740785">
        <id>P49639</id>
        <label>HOXA1</label>
    </interactant>
    <organismsDiffer>false</organismsDiffer>
    <experiments>3</experiments>
</comment>
<comment type="interaction">
    <interactant intactId="EBI-747278">
        <id>P26367</id>
    </interactant>
    <interactant intactId="EBI-1752118">
        <id>P31273</id>
        <label>HOXC8</label>
    </interactant>
    <organismsDiffer>false</organismsDiffer>
    <experiments>3</experiments>
</comment>
<comment type="interaction">
    <interactant intactId="EBI-747278">
        <id>P26367</id>
    </interactant>
    <interactant intactId="EBI-1779423">
        <id>P31274</id>
        <label>HOXC9</label>
    </interactant>
    <organismsDiffer>false</organismsDiffer>
    <experiments>3</experiments>
</comment>
<comment type="interaction">
    <interactant intactId="EBI-747278">
        <id>P26367</id>
    </interactant>
    <interactant intactId="EBI-2556193">
        <id>Q63ZY3</id>
        <label>KANK2</label>
    </interactant>
    <organismsDiffer>false</organismsDiffer>
    <experiments>3</experiments>
</comment>
<comment type="interaction">
    <interactant intactId="EBI-747278">
        <id>P26367</id>
    </interactant>
    <interactant intactId="EBI-11954971">
        <id>Q96MP8-2</id>
        <label>KCTD7</label>
    </interactant>
    <organismsDiffer>false</organismsDiffer>
    <experiments>3</experiments>
</comment>
<comment type="interaction">
    <interactant intactId="EBI-747278">
        <id>P26367</id>
    </interactant>
    <interactant intactId="EBI-1043191">
        <id>Q9BYQ3</id>
        <label>KRTAP9-3</label>
    </interactant>
    <organismsDiffer>false</organismsDiffer>
    <experiments>3</experiments>
</comment>
<comment type="interaction">
    <interactant intactId="EBI-747278">
        <id>P26367</id>
    </interactant>
    <interactant intactId="EBI-11958364">
        <id>Q9BYQ0</id>
        <label>KRTAP9-8</label>
    </interactant>
    <organismsDiffer>false</organismsDiffer>
    <experiments>3</experiments>
</comment>
<comment type="interaction">
    <interactant intactId="EBI-747278">
        <id>P26367</id>
    </interactant>
    <interactant intactId="EBI-12079790">
        <id>Q6P4E2</id>
        <label>LARP4</label>
    </interactant>
    <organismsDiffer>false</organismsDiffer>
    <experiments>3</experiments>
</comment>
<comment type="interaction">
    <interactant intactId="EBI-747278">
        <id>P26367</id>
    </interactant>
    <interactant intactId="EBI-11024283">
        <id>Q9C0E8-2</id>
        <label>LNPK</label>
    </interactant>
    <organismsDiffer>false</organismsDiffer>
    <experiments>3</experiments>
</comment>
<comment type="interaction">
    <interactant intactId="EBI-747278">
        <id>P26367</id>
    </interactant>
    <interactant intactId="EBI-2341787">
        <id>Q17RB8</id>
        <label>LONRF1</label>
    </interactant>
    <organismsDiffer>false</organismsDiffer>
    <experiments>3</experiments>
</comment>
<comment type="interaction">
    <interactant intactId="EBI-747278">
        <id>P26367</id>
    </interactant>
    <interactant intactId="EBI-1044504">
        <id>Q9BS40</id>
        <label>LXN</label>
    </interactant>
    <organismsDiffer>false</organismsDiffer>
    <experiments>3</experiments>
</comment>
<comment type="interaction">
    <interactant intactId="EBI-747278">
        <id>P26367</id>
    </interactant>
    <interactant intactId="EBI-10293291">
        <id>Q96S90</id>
        <label>LYSMD1</label>
    </interactant>
    <organismsDiffer>false</organismsDiffer>
    <experiments>3</experiments>
</comment>
<comment type="interaction">
    <interactant intactId="EBI-747278">
        <id>P26367</id>
    </interactant>
    <interactant intactId="EBI-1004115">
        <id>Q15691</id>
        <label>MAPRE1</label>
    </interactant>
    <organismsDiffer>false</organismsDiffer>
    <experiments>3</experiments>
</comment>
<comment type="interaction">
    <interactant intactId="EBI-747278">
        <id>P26367</id>
    </interactant>
    <interactant intactId="EBI-1048159">
        <id>P55081</id>
        <label>MFAP1</label>
    </interactant>
    <organismsDiffer>false</organismsDiffer>
    <experiments>3</experiments>
</comment>
<comment type="interaction">
    <interactant intactId="EBI-747278">
        <id>P26367</id>
    </interactant>
    <interactant intactId="EBI-2548751">
        <id>Q8TD10</id>
        <label>MIPOL1</label>
    </interactant>
    <organismsDiffer>false</organismsDiffer>
    <experiments>3</experiments>
</comment>
<comment type="interaction">
    <interactant intactId="EBI-747278">
        <id>P26367</id>
    </interactant>
    <interactant intactId="EBI-2555085">
        <id>Q8IVT2</id>
        <label>MISP</label>
    </interactant>
    <organismsDiffer>false</organismsDiffer>
    <experiments>3</experiments>
</comment>
<comment type="interaction">
    <interactant intactId="EBI-747278">
        <id>P26367</id>
    </interactant>
    <interactant intactId="EBI-9675802">
        <id>Q6PF18</id>
        <label>MORN3</label>
    </interactant>
    <organismsDiffer>false</organismsDiffer>
    <experiments>3</experiments>
</comment>
<comment type="interaction">
    <interactant intactId="EBI-747278">
        <id>P26367</id>
    </interactant>
    <interactant intactId="EBI-2513715">
        <id>Q96EL3</id>
        <label>MRPL53</label>
    </interactant>
    <organismsDiffer>false</organismsDiffer>
    <experiments>3</experiments>
</comment>
<comment type="interaction">
    <interactant intactId="EBI-747278">
        <id>P26367</id>
    </interactant>
    <interactant intactId="EBI-1053490">
        <id>Q9UBB6</id>
        <label>NCDN</label>
    </interactant>
    <organismsDiffer>false</organismsDiffer>
    <experiments>3</experiments>
</comment>
<comment type="interaction">
    <interactant intactId="EBI-747278">
        <id>P26367</id>
    </interactant>
    <interactant intactId="EBI-10271199">
        <id>Q8NI38</id>
        <label>NFKBID</label>
    </interactant>
    <organismsDiffer>false</organismsDiffer>
    <experiments>3</experiments>
</comment>
<comment type="interaction">
    <interactant intactId="EBI-747278">
        <id>P26367</id>
    </interactant>
    <interactant intactId="EBI-11956831">
        <id>Q13952-2</id>
        <label>NFYC</label>
    </interactant>
    <organismsDiffer>false</organismsDiffer>
    <experiments>3</experiments>
</comment>
<comment type="interaction">
    <interactant intactId="EBI-747278">
        <id>P26367</id>
    </interactant>
    <interactant intactId="EBI-6165879">
        <id>Q96IV0</id>
        <label>NGLY1</label>
    </interactant>
    <organismsDiffer>false</organismsDiffer>
    <experiments>3</experiments>
</comment>
<comment type="interaction">
    <interactant intactId="EBI-747278">
        <id>P26367</id>
    </interactant>
    <interactant intactId="EBI-12169289">
        <id>Q08493-2</id>
        <label>PDE4C</label>
    </interactant>
    <organismsDiffer>false</organismsDiffer>
    <experiments>3</experiments>
</comment>
<comment type="interaction">
    <interactant intactId="EBI-747278">
        <id>P26367</id>
    </interactant>
    <interactant intactId="EBI-79165">
        <id>Q9NRD5</id>
        <label>PICK1</label>
    </interactant>
    <organismsDiffer>false</organismsDiffer>
    <experiments>3</experiments>
</comment>
<comment type="interaction">
    <interactant intactId="EBI-747278">
        <id>P26367</id>
    </interactant>
    <interactant intactId="EBI-714158">
        <id>Q13526</id>
        <label>PIN1</label>
    </interactant>
    <organismsDiffer>false</organismsDiffer>
    <experiments>3</experiments>
</comment>
<comment type="interaction">
    <interactant intactId="EBI-747278">
        <id>P26367</id>
    </interactant>
    <interactant intactId="EBI-5452779">
        <id>Q9BUI4</id>
        <label>POLR3C</label>
    </interactant>
    <organismsDiffer>false</organismsDiffer>
    <experiments>3</experiments>
</comment>
<comment type="interaction">
    <interactant intactId="EBI-747278">
        <id>P26367</id>
    </interactant>
    <interactant intactId="EBI-2855862">
        <id>Q9BT43</id>
        <label>POLR3GL</label>
    </interactant>
    <organismsDiffer>false</organismsDiffer>
    <experiments>3</experiments>
</comment>
<comment type="interaction">
    <interactant intactId="EBI-747278">
        <id>P26367</id>
    </interactant>
    <interactant intactId="EBI-2513119">
        <id>Q8WUA2</id>
        <label>PPIL4</label>
    </interactant>
    <organismsDiffer>false</organismsDiffer>
    <experiments>3</experiments>
</comment>
<comment type="interaction">
    <interactant intactId="EBI-747278">
        <id>P26367</id>
    </interactant>
    <interactant intactId="EBI-1181439">
        <id>P54619</id>
        <label>PRKAG1</label>
    </interactant>
    <organismsDiffer>false</organismsDiffer>
    <experiments>3</experiments>
</comment>
<comment type="interaction">
    <interactant intactId="EBI-747278">
        <id>P26367</id>
    </interactant>
    <interactant intactId="EBI-11974061">
        <id>Q9UIG4</id>
        <label>PSORS1C2</label>
    </interactant>
    <organismsDiffer>false</organismsDiffer>
    <experiments>3</experiments>
</comment>
<comment type="interaction">
    <interactant intactId="EBI-747278">
        <id>P26367</id>
    </interactant>
    <interactant intactId="EBI-2798044">
        <id>Q2TAL8</id>
        <label>QRICH1</label>
    </interactant>
    <organismsDiffer>false</organismsDiffer>
    <experiments>3</experiments>
</comment>
<comment type="interaction">
    <interactant intactId="EBI-747278">
        <id>P26367</id>
    </interactant>
    <interactant intactId="EBI-743154">
        <id>Q9UBE0</id>
        <label>SAE1</label>
    </interactant>
    <organismsDiffer>false</organismsDiffer>
    <experiments>3</experiments>
</comment>
<comment type="interaction">
    <interactant intactId="EBI-747278">
        <id>P26367</id>
    </interactant>
    <interactant intactId="EBI-10320311">
        <id>Q9UDX3</id>
        <label>SEC14L4</label>
    </interactant>
    <organismsDiffer>false</organismsDiffer>
    <experiments>3</experiments>
</comment>
<comment type="interaction">
    <interactant intactId="EBI-747278">
        <id>P26367</id>
    </interactant>
    <interactant intactId="EBI-7481343">
        <id>Q01105-2</id>
        <label>SET</label>
    </interactant>
    <organismsDiffer>false</organismsDiffer>
    <experiments>3</experiments>
</comment>
<comment type="interaction">
    <interactant intactId="EBI-747278">
        <id>P26367</id>
    </interactant>
    <interactant intactId="EBI-12161783">
        <id>O43699-3</id>
        <label>SIGLEC6</label>
    </interactant>
    <organismsDiffer>false</organismsDiffer>
    <experiments>3</experiments>
</comment>
<comment type="interaction">
    <interactant intactId="EBI-747278">
        <id>P26367</id>
    </interactant>
    <interactant intactId="EBI-11737524">
        <id>A0AV02</id>
        <label>SLC12A8</label>
    </interactant>
    <organismsDiffer>false</organismsDiffer>
    <experiments>3</experiments>
</comment>
<comment type="interaction">
    <interactant intactId="EBI-747278">
        <id>P26367</id>
    </interactant>
    <interactant intactId="EBI-12162209">
        <id>Q5MJ68</id>
        <label>SPDYC</label>
    </interactant>
    <organismsDiffer>false</organismsDiffer>
    <experiments>3</experiments>
</comment>
<comment type="interaction">
    <interactant intactId="EBI-747278">
        <id>P26367</id>
    </interactant>
    <interactant intactId="EBI-742688">
        <id>Q9NZD8</id>
        <label>SPG21</label>
    </interactant>
    <organismsDiffer>false</organismsDiffer>
    <experiments>3</experiments>
</comment>
<comment type="interaction">
    <interactant intactId="EBI-747278">
        <id>P26367</id>
    </interactant>
    <interactant intactId="EBI-11975029">
        <id>Q05519-2</id>
        <label>SRSF11</label>
    </interactant>
    <organismsDiffer>false</organismsDiffer>
    <experiments>3</experiments>
</comment>
<comment type="interaction">
    <interactant intactId="EBI-747278">
        <id>P26367</id>
    </interactant>
    <interactant intactId="EBI-2652799">
        <id>Q99469</id>
        <label>STAC</label>
    </interactant>
    <organismsDiffer>false</organismsDiffer>
    <experiments>3</experiments>
</comment>
<comment type="interaction">
    <interactant intactId="EBI-747278">
        <id>P26367</id>
    </interactant>
    <interactant intactId="EBI-2555179">
        <id>Q9NUJ3</id>
        <label>TCP11L1</label>
    </interactant>
    <organismsDiffer>false</organismsDiffer>
    <experiments>3</experiments>
</comment>
<comment type="interaction">
    <interactant intactId="EBI-747278">
        <id>P26367</id>
    </interactant>
    <interactant intactId="EBI-1765605">
        <id>Q96FV9</id>
        <label>THOC1</label>
    </interactant>
    <organismsDiffer>false</organismsDiffer>
    <experiments>3</experiments>
</comment>
<comment type="interaction">
    <interactant intactId="EBI-747278">
        <id>P26367</id>
    </interactant>
    <interactant intactId="EBI-740492">
        <id>Q9UKI8</id>
        <label>TLK1</label>
    </interactant>
    <organismsDiffer>false</organismsDiffer>
    <experiments>3</experiments>
</comment>
<comment type="interaction">
    <interactant intactId="EBI-747278">
        <id>P26367</id>
    </interactant>
    <interactant intactId="EBI-1047967">
        <id>Q86UE8</id>
        <label>TLK2</label>
    </interactant>
    <organismsDiffer>false</organismsDiffer>
    <experiments>3</experiments>
</comment>
<comment type="interaction">
    <interactant intactId="EBI-747278">
        <id>P26367</id>
    </interactant>
    <interactant intactId="EBI-8451480">
        <id>O75865-2</id>
        <label>TRAPPC6A</label>
    </interactant>
    <organismsDiffer>false</organismsDiffer>
    <experiments>3</experiments>
</comment>
<comment type="interaction">
    <interactant intactId="EBI-747278">
        <id>P26367</id>
    </interactant>
    <interactant intactId="EBI-6550597">
        <id>Q15642-2</id>
        <label>TRIP10</label>
    </interactant>
    <organismsDiffer>false</organismsDiffer>
    <experiments>3</experiments>
</comment>
<comment type="interaction">
    <interactant intactId="EBI-747278">
        <id>P26367</id>
    </interactant>
    <interactant intactId="EBI-1056876">
        <id>Q969M7</id>
        <label>UBE2F</label>
    </interactant>
    <organismsDiffer>false</organismsDiffer>
    <experiments>3</experiments>
</comment>
<comment type="interaction">
    <interactant intactId="EBI-747278">
        <id>P26367</id>
    </interactant>
    <interactant intactId="EBI-473850">
        <id>P61086</id>
        <label>UBE2K</label>
    </interactant>
    <organismsDiffer>false</organismsDiffer>
    <experiments>3</experiments>
</comment>
<comment type="interaction">
    <interactant intactId="EBI-747278">
        <id>P26367</id>
    </interactant>
    <interactant intactId="EBI-1993619">
        <id>Q14CS0</id>
        <label>UBXN2B</label>
    </interactant>
    <organismsDiffer>false</organismsDiffer>
    <experiments>3</experiments>
</comment>
<comment type="interaction">
    <interactant intactId="EBI-747278">
        <id>P26367</id>
    </interactant>
    <interactant intactId="EBI-1993627">
        <id>O94888</id>
        <label>UBXN7</label>
    </interactant>
    <organismsDiffer>false</organismsDiffer>
    <experiments>3</experiments>
</comment>
<comment type="interaction">
    <interactant intactId="EBI-747278">
        <id>P26367</id>
    </interactant>
    <interactant intactId="EBI-739895">
        <id>Q8N6Y0</id>
        <label>USHBP1</label>
    </interactant>
    <organismsDiffer>false</organismsDiffer>
    <experiments>3</experiments>
</comment>
<comment type="interaction">
    <interactant intactId="EBI-747278">
        <id>P26367</id>
    </interactant>
    <interactant intactId="EBI-11983741">
        <id>Q3SXR9</id>
        <label>VCX2</label>
    </interactant>
    <organismsDiffer>false</organismsDiffer>
    <experiments>3</experiments>
</comment>
<comment type="interaction">
    <interactant intactId="EBI-747278">
        <id>P26367</id>
    </interactant>
    <interactant intactId="EBI-712969">
        <id>Q9Y3C0</id>
        <label>WASHC3</label>
    </interactant>
    <organismsDiffer>false</organismsDiffer>
    <experiments>3</experiments>
</comment>
<comment type="interaction">
    <interactant intactId="EBI-747278">
        <id>P26367</id>
    </interactant>
    <interactant intactId="EBI-740037">
        <id>O96006</id>
        <label>ZBED1</label>
    </interactant>
    <organismsDiffer>false</organismsDiffer>
    <experiments>3</experiments>
</comment>
<comment type="interaction">
    <interactant intactId="EBI-747278">
        <id>P26367</id>
    </interactant>
    <interactant intactId="EBI-2555767">
        <id>Q15973</id>
        <label>ZNF124</label>
    </interactant>
    <organismsDiffer>false</organismsDiffer>
    <experiments>3</experiments>
</comment>
<comment type="interaction">
    <interactant intactId="EBI-747278">
        <id>P26367</id>
    </interactant>
    <interactant intactId="EBI-11741890">
        <id>Q86VK4-3</id>
        <label>ZNF410</label>
    </interactant>
    <organismsDiffer>false</organismsDiffer>
    <experiments>3</experiments>
</comment>
<comment type="interaction">
    <interactant intactId="EBI-747278">
        <id>P26367</id>
    </interactant>
    <interactant intactId="EBI-10211777">
        <id>A0A384ME25</id>
    </interactant>
    <organismsDiffer>false</organismsDiffer>
    <experiments>3</experiments>
</comment>
<comment type="interaction">
    <interactant intactId="EBI-747278">
        <id>P26367</id>
    </interactant>
    <interactant intactId="EBI-349121">
        <id>P63168</id>
        <label>Dynll1</label>
    </interactant>
    <organismsDiffer>true</organismsDiffer>
    <experiments>3</experiments>
</comment>
<comment type="interaction">
    <interactant intactId="EBI-15892945">
        <id>P26367-1</id>
    </interactant>
    <interactant intactId="EBI-80152">
        <id>P63166</id>
        <label>Sumo1</label>
    </interactant>
    <organismsDiffer>true</organismsDiffer>
    <experiments>2</experiments>
</comment>
<comment type="subcellular location">
    <subcellularLocation>
        <location evidence="2">Nucleus</location>
    </subcellularLocation>
</comment>
<comment type="subcellular location">
    <molecule>Isoform 1</molecule>
    <subcellularLocation>
        <location evidence="3">Nucleus</location>
    </subcellularLocation>
</comment>
<comment type="subcellular location">
    <molecule>Isoform 5a</molecule>
    <subcellularLocation>
        <location evidence="3">Nucleus</location>
    </subcellularLocation>
</comment>
<comment type="alternative products">
    <event type="alternative splicing"/>
    <isoform>
        <id>P26367-1</id>
        <name>1</name>
        <sequence type="displayed"/>
    </isoform>
    <isoform>
        <id>P26367-2</id>
        <name>5a</name>
        <name>Pax6-5a</name>
        <sequence type="described" ref="VSP_002366"/>
    </isoform>
    <isoform>
        <id>P26367-3</id>
        <name>3</name>
        <name>Pax6-5A,6*</name>
        <sequence type="not described"/>
    </isoform>
</comment>
<comment type="tissue specificity">
    <molecule>Isoform 1</molecule>
    <text evidence="25">Expressed in lymphoblasts.</text>
</comment>
<comment type="tissue specificity">
    <molecule>Isoform 5a</molecule>
    <text evidence="25">Weakly expressed in lymphoblasts.</text>
</comment>
<comment type="developmental stage">
    <text evidence="19">Expressed in the developing eye and brain. Expression in the retina peaks at fetal days 51-60. At 6-week old, in the retina, is predominantly detected in the neural layer (at protein level). At 8- and 10-week old, in the retina, the expression is strongest in the inner and middle layer of the neural part (at protein level).</text>
</comment>
<comment type="PTM">
    <text evidence="1">Ubiquitinated by TRIM11, leading to ubiquitination and proteasomal degradation.</text>
</comment>
<comment type="disease" evidence="7 9 11 12 13 14 15 17 18 20 21 27 29 30 32 33 34 35 36">
    <disease id="DI-01184">
        <name>Aniridia 1</name>
        <acronym>AN1</acronym>
        <description>A congenital, bilateral, panocular disorder characterized by complete absence of the iris or extreme iris hypoplasia. Aniridia is not just an isolated defect in iris development but it is associated with macular and optic nerve hypoplasia, cataract, corneal changes, nystagmus. Visual acuity is generally low but is unrelated to the degree of iris hypoplasia. Glaucoma is a secondary problem causing additional visual loss over time.</description>
        <dbReference type="MIM" id="106210"/>
    </disease>
    <text>The disease is caused by variants affecting the gene represented in this entry.</text>
</comment>
<comment type="disease" evidence="8 16 26">
    <disease id="DI-02157">
        <name>Anterior segment dysgenesis 5</name>
        <acronym>ASGD5</acronym>
        <description>A form of anterior segment dysgenesis, a group of defects affecting anterior structures of the eye including cornea, iris, lens, trabecular meshwork, and Schlemm canal. Anterior segment dysgeneses result from abnormal migration or differentiation of the neural crest derived mesenchymal cells that give rise to components of the anterior chamber during eye development. Different anterior segment anomalies may exist alone or in combination, including iris hypoplasia, enlarged or reduced corneal diameter, corneal vascularization and opacity, posterior embryotoxon, corectopia, polycoria, abnormal iridocorneal angle, ectopia lentis, and anterior synechiae between the iris and posterior corneal surface. Clinical conditions falling within the phenotypic spectrum of anterior segment dysgeneses include aniridia, Axenfeld anomaly, Reiger anomaly/syndrome, Peters anomaly, and iridogoniodysgenesis.</description>
        <dbReference type="MIM" id="604229"/>
    </disease>
    <text>The disease is caused by variants affecting the gene represented in this entry.</text>
</comment>
<comment type="disease" evidence="23 28 34">
    <disease id="DI-01624">
        <name>Foveal hypoplasia 1</name>
        <acronym>FVH1</acronym>
        <description>An isolated form of foveal hypoplasia, a developmental defect of the eye defined as the lack of foveal depression with continuity of all neurosensory retinal layers in the presumed foveal area. Clinical features include absence of foveal pit on optical coherence tomography, absence of foveal hyperpigmentation, absence of foveal avascularity, absence of foveal and macular reflexes, decreased visual acuity, and nystagmus. Anterior segment anomalies and cataract are observed in some FVH1 patients.</description>
        <dbReference type="MIM" id="136520"/>
    </disease>
    <text>The disease is caused by variants affecting the gene represented in this entry.</text>
</comment>
<comment type="disease" evidence="24">
    <disease id="DI-01213">
        <name>Keratitis hereditary</name>
        <acronym>KERH</acronym>
        <description>An ocular disorder characterized by corneal opacification, recurrent stromal keratitis and vascularization.</description>
        <dbReference type="MIM" id="148190"/>
    </disease>
    <text>The disease is caused by variants affecting the gene represented in this entry.</text>
</comment>
<comment type="disease" evidence="16">
    <disease id="DI-02083">
        <name>Microphthalmia/coloboma 12</name>
        <acronym>MCOPCB12</acronym>
        <description>A form of colobomatous microphthalmia, a disorder of eye formation, ranging from small size of a single eye to complete bilateral absence of ocular tissues. Ocular abnormalities like coloboma, opacities of the cornea and lens, scaring of the retina and choroid, and other abnormalities may also be present. Ocular colobomas are a set of malformations resulting from abnormal morphogenesis of the optic cup and stalk, and the fusion of the fetal fissure (optic fissure). MCOPCB12 is an autosomal dominant form characterized by inter- and intrafamilial variability. Some patients also exhibit neurodevelopmental anomalies.</description>
        <dbReference type="MIM" id="120200"/>
    </disease>
    <text>The disease is caused by variants affecting the gene represented in this entry.</text>
</comment>
<comment type="disease" evidence="16">
    <disease id="DI-01358">
        <name>Coloboma of optic nerve</name>
        <acronym>COLON</acronym>
        <description>An ocular defect that is due to malclosure of the fetal intraocular fissure affecting the optic nerve head. In some affected individuals, it appears as enlargement of the physiologic cup with severely affected eyes showing huge cavities at the site of the disk.</description>
        <dbReference type="MIM" id="120430"/>
    </disease>
    <text>The disease is caused by variants affecting the gene represented in this entry.</text>
</comment>
<comment type="disease" evidence="16">
    <disease id="DI-01282">
        <name>Bilateral optic nerve hypoplasia</name>
        <acronym>BONH</acronym>
        <description>A congenital anomaly in which the optic disk appears abnormally small. It may be an isolated finding or part of a spectrum of anatomic and functional abnormalities that includes partial or complete agenesis of the septum pellucidum, other midline brain defects, cerebral anomalies, pituitary dysfunction, and structural abnormalities of the pituitary.</description>
        <dbReference type="MIM" id="165550"/>
    </disease>
    <text>The disease is caused by variants affecting the gene represented in this entry.</text>
</comment>
<comment type="disease" evidence="22">
    <disease id="DI-04858">
        <name>Aniridia 2</name>
        <acronym>AN2</acronym>
        <description>A form of aniridia, a congenital, bilateral, panocular disorder characterized by complete absence of the iris or extreme iris hypoplasia. Aniridia is not just an isolated defect in iris development but it is associated with macular and optic nerve hypoplasia, cataract, corneal changes, nystagmus. Visual acuity is generally low but is unrelated to the degree of iris hypoplasia. Glaucoma is a secondary problem causing additional visual loss over time.</description>
        <dbReference type="MIM" id="617141"/>
    </disease>
    <text evidence="22">The gene represented in this entry is involved in disease pathogenesis. A mutation in a PAX6 long-range cis-regulatory element, known as SIMO, affects PAX6 expression in the developing eye and has pathological consequences. The mutation is located in ELP4 intron 9, 150 kb downstream of PAX6.</text>
</comment>
<comment type="similarity">
    <text evidence="38">Belongs to the paired homeobox family.</text>
</comment>
<comment type="online information" name="Human PAX6 allelic variant database web site">
    <link uri="http://pax6.hgu.mrc.ac.uk/"/>
</comment>
<comment type="online information" name="Atlas of Genetics and Cytogenetics in Oncology and Haematology">
    <link uri="https://atlasgeneticsoncology.org/gene/211/PAX6"/>
</comment>
<feature type="chain" id="PRO_0000050185" description="Paired box protein Pax-6">
    <location>
        <begin position="1"/>
        <end position="422"/>
    </location>
</feature>
<feature type="DNA-binding region" description="Paired" evidence="5">
    <location>
        <begin position="4"/>
        <end position="130"/>
    </location>
</feature>
<feature type="DNA-binding region" description="Homeobox" evidence="4">
    <location>
        <begin position="210"/>
        <end position="269"/>
    </location>
</feature>
<feature type="region of interest" description="PAI subdomain" evidence="5">
    <location>
        <begin position="7"/>
        <end position="63"/>
    </location>
</feature>
<feature type="region of interest" description="RED subdomain" evidence="5">
    <location>
        <begin position="82"/>
        <end position="130"/>
    </location>
</feature>
<feature type="region of interest" description="Disordered" evidence="6">
    <location>
        <begin position="162"/>
        <end position="201"/>
    </location>
</feature>
<feature type="region of interest" description="Disordered" evidence="6">
    <location>
        <begin position="269"/>
        <end position="311"/>
    </location>
</feature>
<feature type="region of interest" description="Required for suppression of NFATC1-mediated transcription" evidence="2">
    <location>
        <begin position="345"/>
        <end position="422"/>
    </location>
</feature>
<feature type="compositionally biased region" description="Low complexity" evidence="6">
    <location>
        <begin position="281"/>
        <end position="294"/>
    </location>
</feature>
<feature type="splice variant" id="VSP_002366" description="In isoform 5a." evidence="37">
    <original>Q</original>
    <variation>QTHADAKVQVLDNQN</variation>
    <location>
        <position position="47"/>
    </location>
</feature>
<feature type="sequence variant" id="VAR_003808" description="In AN1." evidence="33">
    <original>N</original>
    <variation>S</variation>
    <location>
        <position position="17"/>
    </location>
</feature>
<feature type="sequence variant" id="VAR_003809" description="In AN1." evidence="32">
    <original>G</original>
    <variation>W</variation>
    <location>
        <position position="18"/>
    </location>
</feature>
<feature type="sequence variant" id="VAR_047860" description="In AN1." evidence="15 21">
    <original>R</original>
    <variation>P</variation>
    <location>
        <position position="19"/>
    </location>
</feature>
<feature type="sequence variant" id="VAR_008693" description="In AN1." evidence="15 30">
    <location>
        <begin position="22"/>
        <end position="26"/>
    </location>
</feature>
<feature type="sequence variant" id="VAR_003810" description="In ASGD5; dbSNP:rs121907913." evidence="26 29">
    <original>R</original>
    <variation>G</variation>
    <location>
        <position position="26"/>
    </location>
</feature>
<feature type="sequence variant" id="VAR_008694" description="In AN1." evidence="35">
    <original>I</original>
    <variation>S</variation>
    <location>
        <position position="29"/>
    </location>
</feature>
<feature type="sequence variant" id="VAR_003811" description="In AN1." evidence="33">
    <original>I</original>
    <variation>V</variation>
    <location>
        <position position="29"/>
    </location>
</feature>
<feature type="sequence variant" id="VAR_008695" description="In AN1." evidence="34">
    <original>A</original>
    <variation>P</variation>
    <location>
        <position position="33"/>
    </location>
</feature>
<feature type="sequence variant" id="VAR_008696" description="In AN1." evidence="36">
    <location>
        <begin position="37"/>
        <end position="39"/>
    </location>
</feature>
<feature type="sequence variant" id="VAR_084825" description="In FVH1; uncertain significance." evidence="23">
    <original>R</original>
    <variation>Q</variation>
    <location>
        <position position="38"/>
    </location>
</feature>
<feature type="sequence variant" id="VAR_008697" description="In AN1; mild." evidence="7">
    <original>I</original>
    <variation>S</variation>
    <location>
        <position position="42"/>
    </location>
</feature>
<feature type="sequence variant" id="VAR_008698" description="In AN1." evidence="34">
    <original>S</original>
    <variation>P</variation>
    <location>
        <position position="43"/>
    </location>
</feature>
<feature type="sequence variant" id="VAR_003812" description="In AN1." evidence="33">
    <original>R</original>
    <variation>Q</variation>
    <location>
        <position position="44"/>
    </location>
</feature>
<feature type="sequence variant" id="VAR_047861" description="In AN1; shows almost no binding efficiency; transcriptional activation ability is about 50% lower than that of the wild-type protein." evidence="14">
    <original>L</original>
    <variation>R</variation>
    <location>
        <position position="46"/>
    </location>
</feature>
<feature type="sequence variant" id="VAR_047862" description="In AN1; shows almost no binding efficiency; transcriptional activation ability is about 50% lower than that of the wild-type protein." evidence="14">
    <original>C</original>
    <variation>R</variation>
    <location>
        <position position="52"/>
    </location>
</feature>
<feature type="sequence variant" id="VAR_008700" description="In ASGD5; also found in patients with congenital cataract and foveal hypoplasia." evidence="8">
    <original>V</original>
    <variation>D</variation>
    <location>
        <position position="53"/>
    </location>
</feature>
<feature type="sequence variant" id="VAR_008699" description="In AN1; mild; shows 50% lower DNA-binding and transactivation ability than the wild-type protein." evidence="7 14">
    <original>V</original>
    <variation>L</variation>
    <location>
        <position position="53"/>
    </location>
</feature>
<feature type="sequence variant" id="VAR_047863" description="In AN1; shows only one-quarter to one-third the binding ability of the normal wild-type protein; exhibits normal transactivation." evidence="14">
    <original>I</original>
    <variation>T</variation>
    <location>
        <position position="56"/>
    </location>
</feature>
<feature type="sequence variant" id="VAR_008701" description="In AN1; mild." evidence="7">
    <original>T</original>
    <variation>P</variation>
    <location>
        <position position="63"/>
    </location>
</feature>
<feature type="sequence variant" id="VAR_008702" description="In foveal hypoplasia; associated with presenile cataract syndrome; dbSNP:rs121907920." evidence="34">
    <original>G</original>
    <variation>V</variation>
    <location>
        <position position="64"/>
    </location>
</feature>
<feature type="sequence variant" id="VAR_017540" description="In morning glory disk anomaly; significant impairment of transcriptional activation ability; dbSNP:rs121907923." evidence="16">
    <original>P</original>
    <variation>S</variation>
    <location>
        <position position="68"/>
    </location>
</feature>
<feature type="sequence variant" id="VAR_047864" description="In AN1; shows almost no binding efficiency; transcriptional activation ability is about 80% of that of the wild-type protein." evidence="14">
    <original>G</original>
    <variation>D</variation>
    <location>
        <position position="73"/>
    </location>
</feature>
<feature type="sequence variant" id="VAR_008703" description="In AN1; mild." evidence="7">
    <original>A</original>
    <variation>E</variation>
    <location>
        <position position="79"/>
    </location>
</feature>
<feature type="sequence variant" id="VAR_047865" description="In AN1." evidence="14">
    <original>I</original>
    <variation>K</variation>
    <location>
        <position position="87"/>
    </location>
</feature>
<feature type="sequence variant" id="VAR_003813" description="In AN1; loss of activity." evidence="29">
    <original>I</original>
    <variation>R</variation>
    <location>
        <position position="87"/>
    </location>
</feature>
<feature type="sequence variant" id="VAR_015065" description="In a family with nystagmus associated with a variant form of aniridia." evidence="10">
    <original>P</original>
    <variation>R</variation>
    <location>
        <position position="118"/>
    </location>
</feature>
<feature type="sequence variant" id="VAR_008704" description="In AN1; dbSNP:rs121907928." evidence="12 35">
    <original>S</original>
    <variation>R</variation>
    <location>
        <position position="119"/>
    </location>
</feature>
<feature type="sequence variant" id="VAR_017541" description="In FVH1; isolated." evidence="28">
    <original>R</original>
    <variation>C</variation>
    <location>
        <position position="125"/>
    </location>
</feature>
<feature type="sequence variant" id="VAR_008705" description="In AN1; atypical form; dbSNP:rs121907919." evidence="34">
    <original>V</original>
    <variation>D</variation>
    <location>
        <position position="126"/>
    </location>
</feature>
<feature type="sequence variant" id="VAR_003814" description="In FVH1; isolated; dbSNP:rs121907918." evidence="28">
    <original>R</original>
    <variation>C</variation>
    <location>
        <position position="128"/>
    </location>
</feature>
<feature type="sequence variant" id="VAR_003815" description="In AN1." evidence="33">
    <original>Q</original>
    <variation>H</variation>
    <location>
        <position position="178"/>
    </location>
</feature>
<feature type="sequence variant" id="VAR_008706" description="In AN1; mild; dbSNP:rs749244084." evidence="7">
    <original>R</original>
    <variation>Q</variation>
    <location>
        <position position="208"/>
    </location>
</feature>
<feature type="sequence variant" id="VAR_003816" description="In AN1; dbSNP:rs757259413." evidence="27">
    <original>R</original>
    <variation>W</variation>
    <location>
        <position position="208"/>
    </location>
</feature>
<feature type="sequence variant" id="VAR_047866" description="In AN1; the mutant homeodomain binds DNA as well as the wild-type homeodomain; the mutant does not modify the DNA-binding properties of the paired domain; the steady-state levels of the full-length mutant protein are higher than those of the wild-type one; a responsive promoter is activated to a higher extent by the mutant protein than by the wild-type protein; the presence of the mutation reduces sensitivity to trypsin digestion; dbSNP:rs121907927." evidence="13 17">
    <original>R</original>
    <variation>T</variation>
    <location>
        <position position="242"/>
    </location>
</feature>
<feature type="sequence variant" id="VAR_017542" description="In MCOPCB12 and COLON; significant impairment of transcriptional activation ability; dbSNP:rs121907925." evidence="16">
    <original>F</original>
    <variation>S</variation>
    <location>
        <position position="258"/>
    </location>
</feature>
<feature type="sequence variant" id="VAR_017543" description="In BONH; significant impairment of ability to activate transcription." evidence="16">
    <original>S</original>
    <variation>I</variation>
    <location>
        <position position="292"/>
    </location>
</feature>
<feature type="sequence variant" id="VAR_047867" description="Shows about two-fold higher binding efficiency than the normal wild-type protein; transcriptional activation ability is about 89% of that of the wild-type protein." evidence="14">
    <original>A</original>
    <variation>T</variation>
    <location>
        <position position="321"/>
    </location>
</feature>
<feature type="sequence variant" id="VAR_008707" description="In AN1; dbSNP:rs373661718." evidence="35">
    <original>S</original>
    <variation>A</variation>
    <location>
        <position position="353"/>
    </location>
</feature>
<feature type="sequence variant" id="VAR_017544" description="In ASGD5." evidence="16">
    <original>S</original>
    <variation>P</variation>
    <location>
        <position position="363"/>
    </location>
</feature>
<feature type="sequence variant" id="VAR_015066" description="In AN1; reduced DNA binding ability; dbSNP:rs200015827." evidence="11">
    <original>P</original>
    <variation>Q</variation>
    <location>
        <position position="375"/>
    </location>
</feature>
<feature type="sequence variant" id="VAR_017545" description="In optic nerve aplasia." evidence="16">
    <original>Q</original>
    <variation>R</variation>
    <location>
        <position position="378"/>
    </location>
</feature>
<feature type="sequence variant" id="VAR_017546" description="In BONH." evidence="16">
    <original>M</original>
    <variation>V</variation>
    <location>
        <position position="381"/>
    </location>
</feature>
<feature type="sequence variant" id="VAR_047868" description="In dbSNP:rs1392343463." evidence="9">
    <original>G</original>
    <variation>D</variation>
    <location>
        <position position="387"/>
    </location>
</feature>
<feature type="sequence variant" id="VAR_017547" description="In BONH; dbSNP:rs121907926." evidence="16">
    <original>T</original>
    <variation>A</variation>
    <location>
        <position position="391"/>
    </location>
</feature>
<feature type="sequence variant" id="VAR_067698" description="In AN1." evidence="20">
    <original>G</original>
    <variation>R</variation>
    <location>
        <position position="395"/>
    </location>
</feature>
<feature type="sequence variant" id="VAR_008708" description="In AN1 and ocular anterior segment anomalies; loss of DNA binding ability; dbSNP:rs780356070." evidence="11 31">
    <original>Q</original>
    <variation>R</variation>
    <location>
        <position position="422"/>
    </location>
</feature>
<feature type="sequence conflict" description="In Ref. 1; AAA59962." evidence="38" ref="1">
    <original>R</original>
    <variation>L</variation>
    <location>
        <position position="317"/>
    </location>
</feature>
<feature type="sequence conflict" description="In Ref. 4; CAE45868." evidence="38" ref="4">
    <original>Y</original>
    <variation>C</variation>
    <location>
        <position position="369"/>
    </location>
</feature>
<feature type="strand" evidence="40">
    <location>
        <begin position="6"/>
        <end position="8"/>
    </location>
</feature>
<feature type="strand" evidence="40">
    <location>
        <begin position="14"/>
        <end position="16"/>
    </location>
</feature>
<feature type="helix" evidence="40">
    <location>
        <begin position="23"/>
        <end position="34"/>
    </location>
</feature>
<feature type="helix" evidence="40">
    <location>
        <begin position="39"/>
        <end position="46"/>
    </location>
</feature>
<feature type="helix" evidence="40">
    <location>
        <begin position="50"/>
        <end position="63"/>
    </location>
</feature>
<feature type="strand" evidence="40">
    <location>
        <begin position="77"/>
        <end position="79"/>
    </location>
</feature>
<feature type="helix" evidence="40">
    <location>
        <begin position="81"/>
        <end position="93"/>
    </location>
</feature>
<feature type="helix" evidence="40">
    <location>
        <begin position="99"/>
        <end position="108"/>
    </location>
</feature>
<feature type="turn" evidence="40">
    <location>
        <begin position="114"/>
        <end position="116"/>
    </location>
</feature>
<feature type="helix" evidence="40">
    <location>
        <begin position="120"/>
        <end position="133"/>
    </location>
</feature>
<feature type="helix" evidence="39">
    <location>
        <begin position="219"/>
        <end position="229"/>
    </location>
</feature>
<feature type="helix" evidence="39">
    <location>
        <begin position="237"/>
        <end position="246"/>
    </location>
</feature>
<feature type="helix" evidence="39">
    <location>
        <begin position="251"/>
        <end position="275"/>
    </location>
</feature>
<proteinExistence type="evidence at protein level"/>
<gene>
    <name type="primary">PAX6</name>
    <name type="synonym">AN2</name>
</gene>